<reference key="1">
    <citation type="journal article" date="1997" name="J. Biol. Chem.">
        <title>Hrs is associated with STAM, a signal-transducing adaptor molecule. Its suppressive effect on cytokine-induced cell growth.</title>
        <authorList>
            <person name="Asao H."/>
            <person name="Sasaki Y."/>
            <person name="Arita T."/>
            <person name="Tanaka N."/>
            <person name="Endo K."/>
            <person name="Kasai H."/>
            <person name="Takeshita T."/>
            <person name="Endo Y."/>
            <person name="Fujita T."/>
            <person name="Sugamura K."/>
        </authorList>
    </citation>
    <scope>NUCLEOTIDE SEQUENCE [MRNA] (ISOFORM 1)</scope>
    <scope>TISSUE SPECIFICITY</scope>
    <scope>INTERACTION WITH STAM</scope>
</reference>
<reference key="2">
    <citation type="journal article" date="1998" name="Gene">
        <title>Human Hrs, a tyrosine kinase substrate in growth factor-stimulated cells: cDNA cloning and mapping of the gene to chromosome 17.</title>
        <authorList>
            <person name="Lu L."/>
            <person name="Komada M."/>
            <person name="Kitamura N."/>
        </authorList>
    </citation>
    <scope>NUCLEOTIDE SEQUENCE [MRNA] (ISOFORM 1)</scope>
    <scope>TISSUE SPECIFICITY</scope>
    <source>
        <tissue>Placenta</tissue>
    </source>
</reference>
<reference key="3">
    <citation type="journal article" date="2000" name="Hum. Mol. Genet.">
        <title>The neurofibromatosis 2 tumor suppressor protein interacts with hepatocyte growth factor-regulated tyrosine kinase substrate.</title>
        <authorList>
            <person name="Scoles D.R."/>
            <person name="Huynh D.P."/>
            <person name="Chen M.S."/>
            <person name="Burke S.P."/>
            <person name="Gutmann D.H."/>
            <person name="Pulst S.-M."/>
        </authorList>
    </citation>
    <scope>NUCLEOTIDE SEQUENCE [MRNA] (ISOFORM 2)</scope>
    <scope>DOMAIN</scope>
    <scope>INTERACTION WITH NF2</scope>
    <scope>SUBCELLULAR LOCATION</scope>
    <source>
        <tissue>Brain</tissue>
    </source>
</reference>
<reference key="4">
    <citation type="submission" date="2003-08" db="EMBL/GenBank/DDBJ databases">
        <title>Cloning of human full-length CDSs in BD Creator(TM) system donor vector.</title>
        <authorList>
            <person name="Kalnine N."/>
            <person name="Chen X."/>
            <person name="Rolfs A."/>
            <person name="Halleck A."/>
            <person name="Hines L."/>
            <person name="Eisenstein S."/>
            <person name="Koundinya M."/>
            <person name="Raphael J."/>
            <person name="Moreira D."/>
            <person name="Kelley T."/>
            <person name="LaBaer J."/>
            <person name="Lin Y."/>
            <person name="Phelan M."/>
            <person name="Farmer A."/>
        </authorList>
    </citation>
    <scope>NUCLEOTIDE SEQUENCE [LARGE SCALE MRNA] (ISOFORM 1)</scope>
</reference>
<reference key="5">
    <citation type="journal article" date="2004" name="Genome Res.">
        <title>The status, quality, and expansion of the NIH full-length cDNA project: the Mammalian Gene Collection (MGC).</title>
        <authorList>
            <consortium name="The MGC Project Team"/>
        </authorList>
    </citation>
    <scope>NUCLEOTIDE SEQUENCE [LARGE SCALE MRNA] (ISOFORM 1)</scope>
    <source>
        <tissue>Skin</tissue>
    </source>
</reference>
<reference key="6">
    <citation type="journal article" date="1997" name="J. Biol. Chem.">
        <title>Hrs, a tyrosine kinase substrate with a conserved double zinc finger domain, is localized to the cytoplasmic surface of early endosomes.</title>
        <authorList>
            <person name="Komada M."/>
            <person name="Masaki R."/>
            <person name="Yamamoto A."/>
            <person name="Kitamura N."/>
        </authorList>
    </citation>
    <scope>SUBCELLULAR LOCATION</scope>
</reference>
<reference key="7">
    <citation type="journal article" date="2003" name="Dev. Cell">
        <title>The E3 ubiquitin ligase AIP4 mediates ubiquitination and sorting of the G protein-coupled receptor CXCR4.</title>
        <authorList>
            <person name="Marchese A."/>
            <person name="Raiborg C."/>
            <person name="Santini F."/>
            <person name="Keen J.H."/>
            <person name="Stenmark H."/>
            <person name="Benovic J.L."/>
        </authorList>
    </citation>
    <scope>UBIQUITINATION BY ITCH</scope>
</reference>
<reference key="8">
    <citation type="journal article" date="2003" name="J. Biol. Chem.">
        <title>STAM and Hrs are subunits of a multivalent ubiquitin-binding complex on early endosomes.</title>
        <authorList>
            <person name="Bache K.G."/>
            <person name="Raiborg C."/>
            <person name="Mehlum A."/>
            <person name="Stenmark H."/>
        </authorList>
    </citation>
    <scope>INTERACTION WITH STAM; STAM2 AND EPS15</scope>
    <scope>IDENTIFICATION IN A COMPLEX WITH STAM2 AND EPS15</scope>
</reference>
<reference key="9">
    <citation type="journal article" date="2003" name="J. Cell Biol.">
        <title>HIV Gag mimics the Tsg101-recruiting activity of the human Hrs protein.</title>
        <authorList>
            <person name="Pornillos O."/>
            <person name="Higginson D.S."/>
            <person name="Stray K.M."/>
            <person name="Fisher R.D."/>
            <person name="Garrus J.E."/>
            <person name="Payne M."/>
            <person name="He G.P."/>
            <person name="Wang H.E."/>
            <person name="Morham S.G."/>
            <person name="Sundquist W.I."/>
        </authorList>
    </citation>
    <scope>INTERACTION WITH HIV-1 GAG AND HGS</scope>
    <scope>SELF-ASSOCIATION</scope>
</reference>
<reference key="10">
    <citation type="journal article" date="2005" name="J. Biol. Chem.">
        <title>Identification of human VPS37C, a component of endosomal sorting complex required for transport-I important for viral budding.</title>
        <authorList>
            <person name="Eastman S.W."/>
            <person name="Martin-Serrano J."/>
            <person name="Chung W."/>
            <person name="Zang T."/>
            <person name="Bieniasz P.D."/>
        </authorList>
    </citation>
    <scope>INTERACTION WITH VPS37C</scope>
</reference>
<reference key="11">
    <citation type="journal article" date="2005" name="J. Cell Sci.">
        <title>Ubiquilin recruits Eps15 into ubiquitin-rich cytoplasmic aggregates via a UIM-UBL interaction.</title>
        <authorList>
            <person name="Regan-Klapisz E."/>
            <person name="Sorokina I."/>
            <person name="Voortman J."/>
            <person name="de Keizer P."/>
            <person name="Roovers R.C."/>
            <person name="Verheesen P."/>
            <person name="Urbe S."/>
            <person name="Fallon L."/>
            <person name="Fon E.A."/>
            <person name="Verkleij A."/>
            <person name="Benmerah A."/>
            <person name="van Bergen en Henegouwen P.M."/>
        </authorList>
    </citation>
    <scope>SUBCELLULAR LOCATION</scope>
</reference>
<reference key="12">
    <citation type="journal article" date="2005" name="Nat. Biotechnol.">
        <title>Immunoaffinity profiling of tyrosine phosphorylation in cancer cells.</title>
        <authorList>
            <person name="Rush J."/>
            <person name="Moritz A."/>
            <person name="Lee K.A."/>
            <person name="Guo A."/>
            <person name="Goss V.L."/>
            <person name="Spek E.J."/>
            <person name="Zhang H."/>
            <person name="Zha X.-M."/>
            <person name="Polakiewicz R.D."/>
            <person name="Comb M.J."/>
        </authorList>
    </citation>
    <scope>PHOSPHORYLATION [LARGE SCALE ANALYSIS] AT TYR-216</scope>
    <scope>IDENTIFICATION BY MASS SPECTROMETRY [LARGE SCALE ANALYSIS]</scope>
</reference>
<reference key="13">
    <citation type="journal article" date="2006" name="Nat. Biotechnol.">
        <title>A probability-based approach for high-throughput protein phosphorylation analysis and site localization.</title>
        <authorList>
            <person name="Beausoleil S.A."/>
            <person name="Villen J."/>
            <person name="Gerber S.A."/>
            <person name="Rush J."/>
            <person name="Gygi S.P."/>
        </authorList>
    </citation>
    <scope>IDENTIFICATION BY MASS SPECTROMETRY [LARGE SCALE ANALYSIS]</scope>
    <source>
        <tissue>Cervix carcinoma</tissue>
    </source>
</reference>
<reference key="14">
    <citation type="journal article" date="2008" name="J. Mol. Biol.">
        <title>Hypertonia-associated protein Trak1 is a novel regulator of endosome-to-lysosome trafficking.</title>
        <authorList>
            <person name="Webber E."/>
            <person name="Li L."/>
            <person name="Chin L.S."/>
        </authorList>
    </citation>
    <scope>INTERACTION WITH TRAK1</scope>
</reference>
<reference key="15">
    <citation type="journal article" date="2005" name="Mol. Biol. Cell">
        <title>CART: an Hrs/actinin-4/BERP/myosin V protein complex required for efficient receptor recycling.</title>
        <authorList>
            <person name="Yan Q."/>
            <person name="Sun W."/>
            <person name="Kujala P."/>
            <person name="Lotfi Y."/>
            <person name="Vida T.A."/>
            <person name="Bean A.J."/>
        </authorList>
    </citation>
    <scope>IDENTIFICATION IN THE CART COMPLEX</scope>
</reference>
<reference key="16">
    <citation type="journal article" date="2008" name="Proc. Natl. Acad. Sci. U.S.A.">
        <title>A quantitative atlas of mitotic phosphorylation.</title>
        <authorList>
            <person name="Dephoure N."/>
            <person name="Zhou C."/>
            <person name="Villen J."/>
            <person name="Beausoleil S.A."/>
            <person name="Bakalarski C.E."/>
            <person name="Elledge S.J."/>
            <person name="Gygi S.P."/>
        </authorList>
    </citation>
    <scope>IDENTIFICATION BY MASS SPECTROMETRY [LARGE SCALE ANALYSIS]</scope>
    <source>
        <tissue>Cervix carcinoma</tissue>
    </source>
</reference>
<reference key="17">
    <citation type="journal article" date="2009" name="Anal. Chem.">
        <title>Lys-N and trypsin cover complementary parts of the phosphoproteome in a refined SCX-based approach.</title>
        <authorList>
            <person name="Gauci S."/>
            <person name="Helbig A.O."/>
            <person name="Slijper M."/>
            <person name="Krijgsveld J."/>
            <person name="Heck A.J."/>
            <person name="Mohammed S."/>
        </authorList>
    </citation>
    <scope>IDENTIFICATION BY MASS SPECTROMETRY [LARGE SCALE ANALYSIS]</scope>
</reference>
<reference key="18">
    <citation type="journal article" date="2009" name="Proteins">
        <title>Membrane insertion of the FYVE domain is modulated by pH.</title>
        <authorList>
            <person name="He J."/>
            <person name="Vora M."/>
            <person name="Haney R.M."/>
            <person name="Filonov G.S."/>
            <person name="Musselman C.A."/>
            <person name="Burd C.G."/>
            <person name="Kutateladze A.G."/>
            <person name="Verkhusha V.V."/>
            <person name="Stahelin R.V."/>
            <person name="Kutateladze T.G."/>
        </authorList>
    </citation>
    <scope>DOMAIN FYVE-TYPE ZINC-FINGER</scope>
</reference>
<reference key="19">
    <citation type="journal article" date="2009" name="Science">
        <title>Lysine acetylation targets protein complexes and co-regulates major cellular functions.</title>
        <authorList>
            <person name="Choudhary C."/>
            <person name="Kumar C."/>
            <person name="Gnad F."/>
            <person name="Nielsen M.L."/>
            <person name="Rehman M."/>
            <person name="Walther T.C."/>
            <person name="Olsen J.V."/>
            <person name="Mann M."/>
        </authorList>
    </citation>
    <scope>ACETYLATION [LARGE SCALE ANALYSIS] AT LYS-207</scope>
    <scope>IDENTIFICATION BY MASS SPECTROMETRY [LARGE SCALE ANALYSIS]</scope>
</reference>
<reference key="20">
    <citation type="journal article" date="2010" name="Sci. Signal.">
        <title>Quantitative phosphoproteomics reveals widespread full phosphorylation site occupancy during mitosis.</title>
        <authorList>
            <person name="Olsen J.V."/>
            <person name="Vermeulen M."/>
            <person name="Santamaria A."/>
            <person name="Kumar C."/>
            <person name="Miller M.L."/>
            <person name="Jensen L.J."/>
            <person name="Gnad F."/>
            <person name="Cox J."/>
            <person name="Jensen T.S."/>
            <person name="Nigg E.A."/>
            <person name="Brunak S."/>
            <person name="Mann M."/>
        </authorList>
    </citation>
    <scope>IDENTIFICATION BY MASS SPECTROMETRY [LARGE SCALE ANALYSIS]</scope>
    <source>
        <tissue>Cervix carcinoma</tissue>
    </source>
</reference>
<reference key="21">
    <citation type="journal article" date="2011" name="BMC Syst. Biol.">
        <title>Initial characterization of the human central proteome.</title>
        <authorList>
            <person name="Burkard T.R."/>
            <person name="Planyavsky M."/>
            <person name="Kaupe I."/>
            <person name="Breitwieser F.P."/>
            <person name="Buerckstuemmer T."/>
            <person name="Bennett K.L."/>
            <person name="Superti-Furga G."/>
            <person name="Colinge J."/>
        </authorList>
    </citation>
    <scope>IDENTIFICATION BY MASS SPECTROMETRY [LARGE SCALE ANALYSIS]</scope>
</reference>
<reference key="22">
    <citation type="journal article" date="2012" name="J. Cell Biol.">
        <title>Charcot-Marie-Tooth disease-linked protein SIMPLE functions with the ESCRT machinery in endosomal trafficking.</title>
        <authorList>
            <person name="Lee S.M."/>
            <person name="Chin L.S."/>
            <person name="Li L."/>
        </authorList>
    </citation>
    <scope>IDENTIFICATION IN A COMPLEX WITH STAM AND LITAF</scope>
    <scope>SUBCELLULAR LOCATION</scope>
</reference>
<reference key="23">
    <citation type="journal article" date="2012" name="PLoS ONE">
        <title>Mammalian alpha arrestins link activated seven transmembrane receptors to Nedd4 family e3 ubiquitin ligases and interact with beta arrestins.</title>
        <authorList>
            <person name="Shea F.F."/>
            <person name="Rowell J.L."/>
            <person name="Li Y."/>
            <person name="Chang T.H."/>
            <person name="Alvarez C.E."/>
        </authorList>
    </citation>
    <scope>IDENTIFICATION IN A COMPLEX WITH ARRDC4 AND AVPR2</scope>
</reference>
<reference key="24">
    <citation type="journal article" date="2013" name="EMBO Rep.">
        <title>Distinct roles for beta-arrestin2 and arrestin-domain-containing proteins in beta2 adrenergic receptor trafficking.</title>
        <authorList>
            <person name="Han S.O."/>
            <person name="Kommaddi R.P."/>
            <person name="Shenoy S.K."/>
        </authorList>
    </citation>
    <scope>INTERACTION WITH ARRDC3</scope>
</reference>
<reference key="25">
    <citation type="journal article" date="2014" name="J. Proteomics">
        <title>An enzyme assisted RP-RPLC approach for in-depth analysis of human liver phosphoproteome.</title>
        <authorList>
            <person name="Bian Y."/>
            <person name="Song C."/>
            <person name="Cheng K."/>
            <person name="Dong M."/>
            <person name="Wang F."/>
            <person name="Huang J."/>
            <person name="Sun D."/>
            <person name="Wang L."/>
            <person name="Ye M."/>
            <person name="Zou H."/>
        </authorList>
    </citation>
    <scope>IDENTIFICATION BY MASS SPECTROMETRY [LARGE SCALE ANALYSIS]</scope>
    <source>
        <tissue>Liver</tissue>
    </source>
</reference>
<reference key="26">
    <citation type="journal article" date="2014" name="Mol. Biol. Cell">
        <title>The ubiquitin ligase deltex-3l regulates endosomal sorting of the G protein-coupled receptor CXCR4.</title>
        <authorList>
            <person name="Holleman J."/>
            <person name="Marchese A."/>
        </authorList>
    </citation>
    <scope>INTERACTION WITH DTX3L</scope>
    <scope>IDENTIFICATION IN A COMPLEX WITH DTX3L; STAM AND ITCH</scope>
    <scope>SUBCELLULAR LOCATION</scope>
    <scope>UBIQUITINATION</scope>
</reference>
<reference key="27">
    <citation type="journal article" date="2015" name="EMBO J.">
        <title>LAPTM4B is a PtdIns(4,5)P2 effector that regulates EGFR signaling, lysosomal sorting, and degradation.</title>
        <authorList>
            <person name="Tan X."/>
            <person name="Sun Y."/>
            <person name="Thapa N."/>
            <person name="Liao Y."/>
            <person name="Hedman A.C."/>
            <person name="Anderson R.A."/>
        </authorList>
    </citation>
    <scope>INTERACTION WITH LAPTM4B</scope>
    <scope>UBIQUITINATION</scope>
</reference>
<reference key="28">
    <citation type="journal article" date="2006" name="Nat. Struct. Mol. Biol.">
        <title>Double-sided ubiquitin binding of Hrs-UIM in endosomal protein sorting.</title>
        <authorList>
            <person name="Hirano S."/>
            <person name="Kawasaki M."/>
            <person name="Ura H."/>
            <person name="Kato R."/>
            <person name="Raiborg C."/>
            <person name="Stenmark H."/>
            <person name="Wakatsuki S."/>
        </authorList>
    </citation>
    <scope>X-RAY CRYSTALLOGRAPHY (1.7 ANGSTROMS) OF 257-277 IN COMPLEX WITH UBIQUITIN</scope>
    <scope>MUTAGENESIS OF ALA-266 AND ALA-268</scope>
</reference>
<reference key="29">
    <citation type="journal article" date="2009" name="Structure">
        <title>Hybrid structural model of the complete human ESCRT-0 complex.</title>
        <authorList>
            <person name="Ren X."/>
            <person name="Kloer D.P."/>
            <person name="Kim Y.C."/>
            <person name="Ghirlando R."/>
            <person name="Saidi L.F."/>
            <person name="Hummer G."/>
            <person name="Hurley J.H."/>
        </authorList>
    </citation>
    <scope>X-RAY CRYSTALLOGRAPHY (2.30 ANGSTROMS) OF 404-501 IN COMPLEX WITH STAM</scope>
    <scope>INTERACTION WITH STAM</scope>
</reference>
<reference key="30">
    <citation type="journal article" date="2010" name="Structure">
        <title>Crystallographic and functional analysis of the ESCRT-I /HIV-1 Gag PTAP interaction.</title>
        <authorList>
            <person name="Im Y.J."/>
            <person name="Kuo L."/>
            <person name="Ren X."/>
            <person name="Burgos P.V."/>
            <person name="Zhao X.Z."/>
            <person name="Liu F."/>
            <person name="Burke T.R. Jr."/>
            <person name="Bonifacino J.S."/>
            <person name="Freed E.O."/>
            <person name="Hurley J.H."/>
        </authorList>
    </citation>
    <scope>X-RAY CRYSTALLOGRAPHY (1.40 ANGSTROMS) OF 346-354 IN COMPLEX WITH TSG101</scope>
    <scope>INTERACTION WITH TSG101</scope>
</reference>
<reference key="31">
    <citation type="journal article" date="2008" name="Nature">
        <title>DNA sequencing of a cytogenetically normal acute myeloid leukaemia genome.</title>
        <authorList>
            <person name="Ley T.J."/>
            <person name="Mardis E.R."/>
            <person name="Ding L."/>
            <person name="Fulton B."/>
            <person name="McLellan M.D."/>
            <person name="Chen K."/>
            <person name="Dooling D."/>
            <person name="Dunford-Shore B.H."/>
            <person name="McGrath S."/>
            <person name="Hickenbotham M."/>
            <person name="Cook L."/>
            <person name="Abbott R."/>
            <person name="Larson D.E."/>
            <person name="Koboldt D.C."/>
            <person name="Pohl C."/>
            <person name="Smith S."/>
            <person name="Hawkins A."/>
            <person name="Abbott S."/>
            <person name="Locke D."/>
            <person name="Hillier L.W."/>
            <person name="Miner T."/>
            <person name="Fulton L."/>
            <person name="Magrini V."/>
            <person name="Wylie T."/>
            <person name="Glasscock J."/>
            <person name="Conyers J."/>
            <person name="Sander N."/>
            <person name="Shi X."/>
            <person name="Osborne J.R."/>
            <person name="Minx P."/>
            <person name="Gordon D."/>
            <person name="Chinwalla A."/>
            <person name="Zhao Y."/>
            <person name="Ries R.E."/>
            <person name="Payton J.E."/>
            <person name="Westervelt P."/>
            <person name="Tomasson M.H."/>
            <person name="Watson M."/>
            <person name="Baty J."/>
            <person name="Ivanovich J."/>
            <person name="Heath S."/>
            <person name="Shannon W.D."/>
            <person name="Nagarajan R."/>
            <person name="Walter M.J."/>
            <person name="Link D.C."/>
            <person name="Graubert T.A."/>
            <person name="DiPersio J.F."/>
            <person name="Wilson R.K."/>
        </authorList>
    </citation>
    <scope>VARIANT [LARGE SCALE ANALYSIS] SER-7</scope>
</reference>
<comment type="function">
    <text>Involved in intracellular signal transduction mediated by cytokines and growth factors. When associated with STAM, it suppresses DNA signaling upon stimulation by IL-2 and GM-CSF. Could be a direct effector of PI3-kinase in vesicular pathway via early endosomes and may regulate trafficking to early and late endosomes by recruiting clathrin. May concentrate ubiquitinated receptors within clathrin-coated regions. Involved in down-regulation of receptor tyrosine kinase via multivesicular body (MVBs) when complexed with STAM (ESCRT-0 complex). The ESCRT-0 complex binds ubiquitin and acts as a sorting machinery that recognizes ubiquitinated receptors and transfers them to further sequential lysosomal sorting/trafficking processes. May contribute to the efficient recruitment of SMADs to the activin receptor complex. Involved in receptor recycling via its association with the CART complex, a multiprotein complex required for efficient transferrin receptor recycling but not for EGFR degradation.</text>
</comment>
<comment type="subunit">
    <text evidence="2 3 8 9 10 12 13 15 16 18 19 20 21 22 23 24 25">Component of the ESCRT-0 complex composed of STAM or STAM2 and HGS. Part of a complex at least composed of HSG, STAM2 (or probably STAM) and EPS15 (PubMed:12551915). Interacts with STAM (PubMed:9407053). Interacts with STAM2 (By similarity). Interacts with EPS15; the interaction is direct, calcium-dependent and inhibited by SNAP25 (By similarity). Identified in a complex with STAM and LITAF (PubMed:23166352). Found in a complex with STAM and E3 ligase ITCH and DTX3L (PubMed:24790097). Interacts with E3 ligase DTX3L; the interaction brings together STAM and HSG, promotes their recruitment to early endosomes and decreases STAM and HGS ubiquitination by ITCH (PubMed:24790097). Interacts with NF2; the interaction is direct (PubMed:10861283). Interacts with ubiquitin; the interaction is direct (By similarity). Interacts with VPS37C (PubMed:15509564). Interacts with SMAD1, SMAD2 and SMAD3 (By similarity). Interacts with TSG101; the interaction mediates the association with the ESCRT-I complex (PubMed:21070952). Interacts with SNAP25; the interaction is direct and decreases with addition of increasing concentrations of free calcium (By similarity). Interacts with SNX1; the interaction is direct (By similarity). Component of a 550 kDa membrane complex at least composed of HGS and SNX1 but excluding EGFR (By similarity). Interacts with TRAK1 (PubMed:18675823). Interacts with TRAK2 (By similarity). Component of the CART complex, at least composed of ACTN4, HGS/HRS, MYO5B and TRIM3 (PubMed:15772161). Interacts (via UIM domain) with UBQLN1 (via ubiquitin-like domain) (By similarity). Interacts with ARRDC3 (PubMed:23208550). Identified in a complex containing at least ARRDC4, AVPR2 and HGS (PubMed:23236378). Interacts with LAPTM4B; promotes HGS ubiquitination (PubMed:25588945).</text>
</comment>
<comment type="interaction">
    <interactant intactId="EBI-740220">
        <id>O14964</id>
    </interactant>
    <interactant intactId="EBI-743598">
        <id>Q9NYB9</id>
        <label>ABI2</label>
    </interactant>
    <organismsDiffer>false</organismsDiffer>
    <experiments>5</experiments>
</comment>
<comment type="interaction">
    <interactant intactId="EBI-740220">
        <id>O14964</id>
    </interactant>
    <interactant intactId="EBI-17721098">
        <id>Q8WXI4-2</id>
        <label>ACOT11</label>
    </interactant>
    <organismsDiffer>false</organismsDiffer>
    <experiments>3</experiments>
</comment>
<comment type="interaction">
    <interactant intactId="EBI-740220">
        <id>O14964</id>
    </interactant>
    <interactant intactId="EBI-2880652">
        <id>Q08043</id>
        <label>ACTN3</label>
    </interactant>
    <organismsDiffer>false</organismsDiffer>
    <experiments>3</experiments>
</comment>
<comment type="interaction">
    <interactant intactId="EBI-740220">
        <id>O14964</id>
    </interactant>
    <interactant intactId="EBI-12015266">
        <id>P18825</id>
        <label>ADRA2C</label>
    </interactant>
    <organismsDiffer>false</organismsDiffer>
    <experiments>3</experiments>
</comment>
<comment type="interaction">
    <interactant intactId="EBI-740220">
        <id>O14964</id>
    </interactant>
    <interactant intactId="EBI-357530">
        <id>Q9ULX6</id>
        <label>AKAP8L</label>
    </interactant>
    <organismsDiffer>false</organismsDiffer>
    <experiments>3</experiments>
</comment>
<comment type="interaction">
    <interactant intactId="EBI-740220">
        <id>O14964</id>
    </interactant>
    <interactant intactId="EBI-14493093">
        <id>Q3KP44</id>
        <label>ANKRD55</label>
    </interactant>
    <organismsDiffer>false</organismsDiffer>
    <experiments>3</experiments>
</comment>
<comment type="interaction">
    <interactant intactId="EBI-740220">
        <id>O14964</id>
    </interactant>
    <interactant intactId="EBI-713602">
        <id>Q9BQD7</id>
        <label>ANTKMT</label>
    </interactant>
    <organismsDiffer>false</organismsDiffer>
    <experiments>3</experiments>
</comment>
<comment type="interaction">
    <interactant intactId="EBI-740220">
        <id>O14964</id>
    </interactant>
    <interactant intactId="EBI-638194">
        <id>P53365</id>
        <label>ARFIP2</label>
    </interactant>
    <organismsDiffer>false</organismsDiffer>
    <experiments>3</experiments>
</comment>
<comment type="interaction">
    <interactant intactId="EBI-740220">
        <id>O14964</id>
    </interactant>
    <interactant intactId="EBI-742909">
        <id>Q9H6L4</id>
        <label>ARMC7</label>
    </interactant>
    <organismsDiffer>false</organismsDiffer>
    <experiments>3</experiments>
</comment>
<comment type="interaction">
    <interactant intactId="EBI-740220">
        <id>O14964</id>
    </interactant>
    <interactant intactId="EBI-18394052">
        <id>Q8WXK4-2</id>
        <label>ASB12</label>
    </interactant>
    <organismsDiffer>false</organismsDiffer>
    <experiments>3</experiments>
</comment>
<comment type="interaction">
    <interactant intactId="EBI-740220">
        <id>O14964</id>
    </interactant>
    <interactant intactId="EBI-11954292">
        <id>Q86V38</id>
        <label>ATN1</label>
    </interactant>
    <organismsDiffer>false</organismsDiffer>
    <experiments>3</experiments>
</comment>
<comment type="interaction">
    <interactant intactId="EBI-740220">
        <id>O14964</id>
    </interactant>
    <interactant intactId="EBI-17289784">
        <id>Q96PG8</id>
        <label>BBC3</label>
    </interactant>
    <organismsDiffer>false</organismsDiffer>
    <experiments>3</experiments>
</comment>
<comment type="interaction">
    <interactant intactId="EBI-740220">
        <id>O14964</id>
    </interactant>
    <interactant intactId="EBI-1050106">
        <id>O75934</id>
        <label>BCAS2</label>
    </interactant>
    <organismsDiffer>false</organismsDiffer>
    <experiments>4</experiments>
</comment>
<comment type="interaction">
    <interactant intactId="EBI-740220">
        <id>O14964</id>
    </interactant>
    <interactant intactId="EBI-10229433">
        <id>Q13515</id>
        <label>BFSP2</label>
    </interactant>
    <organismsDiffer>false</organismsDiffer>
    <experiments>3</experiments>
</comment>
<comment type="interaction">
    <interactant intactId="EBI-740220">
        <id>O14964</id>
    </interactant>
    <interactant intactId="EBI-1012434">
        <id>Q6AI39</id>
        <label>BICRAL</label>
    </interactant>
    <organismsDiffer>false</organismsDiffer>
    <experiments>3</experiments>
</comment>
<comment type="interaction">
    <interactant intactId="EBI-740220">
        <id>O14964</id>
    </interactant>
    <interactant intactId="EBI-348630">
        <id>P78537</id>
        <label>BLOC1S1</label>
    </interactant>
    <organismsDiffer>false</organismsDiffer>
    <experiments>3</experiments>
</comment>
<comment type="interaction">
    <interactant intactId="EBI-740220">
        <id>O14964</id>
    </interactant>
    <interactant intactId="EBI-10193358">
        <id>Q96GS4</id>
        <label>BORCS6</label>
    </interactant>
    <organismsDiffer>false</organismsDiffer>
    <experiments>3</experiments>
</comment>
<comment type="interaction">
    <interactant intactId="EBI-740220">
        <id>O14964</id>
    </interactant>
    <interactant intactId="EBI-946029">
        <id>Q6P1W5</id>
        <label>C1orf94</label>
    </interactant>
    <organismsDiffer>false</organismsDiffer>
    <experiments>3</experiments>
</comment>
<comment type="interaction">
    <interactant intactId="EBI-740220">
        <id>O14964</id>
    </interactant>
    <interactant intactId="EBI-12851858">
        <id>Q96LM9</id>
        <label>C20orf173</label>
    </interactant>
    <organismsDiffer>false</organismsDiffer>
    <experiments>3</experiments>
</comment>
<comment type="interaction">
    <interactant intactId="EBI-740220">
        <id>O14964</id>
    </interactant>
    <interactant intactId="EBI-18036948">
        <id>Q3SXR2</id>
        <label>C3orf36</label>
    </interactant>
    <organismsDiffer>false</organismsDiffer>
    <experiments>3</experiments>
</comment>
<comment type="interaction">
    <interactant intactId="EBI-740220">
        <id>O14964</id>
    </interactant>
    <interactant intactId="EBI-10261970">
        <id>Q8IW40</id>
        <label>CCDC103</label>
    </interactant>
    <organismsDiffer>false</organismsDiffer>
    <experiments>4</experiments>
</comment>
<comment type="interaction">
    <interactant intactId="EBI-740220">
        <id>O14964</id>
    </interactant>
    <interactant intactId="EBI-10181422">
        <id>A0A1B0GWI1</id>
        <label>CCDC196</label>
    </interactant>
    <organismsDiffer>false</organismsDiffer>
    <experiments>3</experiments>
</comment>
<comment type="interaction">
    <interactant intactId="EBI-740220">
        <id>O14964</id>
    </interactant>
    <interactant intactId="EBI-375013">
        <id>P30281</id>
        <label>CCND3</label>
    </interactant>
    <organismsDiffer>false</organismsDiffer>
    <experiments>3</experiments>
</comment>
<comment type="interaction">
    <interactant intactId="EBI-740220">
        <id>O14964</id>
    </interactant>
    <interactant intactId="EBI-1181367">
        <id>Q01850</id>
        <label>CDR2</label>
    </interactant>
    <organismsDiffer>false</organismsDiffer>
    <experiments>6</experiments>
</comment>
<comment type="interaction">
    <interactant intactId="EBI-740220">
        <id>O14964</id>
    </interactant>
    <interactant intactId="EBI-4314501">
        <id>P40199</id>
        <label>CEACAM6</label>
    </interactant>
    <organismsDiffer>false</organismsDiffer>
    <experiments>3</experiments>
</comment>
<comment type="interaction">
    <interactant intactId="EBI-740220">
        <id>O14964</id>
    </interactant>
    <interactant intactId="EBI-747776">
        <id>Q53EZ4</id>
        <label>CEP55</label>
    </interactant>
    <organismsDiffer>false</organismsDiffer>
    <experiments>5</experiments>
</comment>
<comment type="interaction">
    <interactant intactId="EBI-740220">
        <id>O14964</id>
    </interactant>
    <interactant intactId="EBI-10181988">
        <id>Q8IYX8-2</id>
        <label>CEP57L1</label>
    </interactant>
    <organismsDiffer>false</organismsDiffer>
    <experiments>3</experiments>
</comment>
<comment type="interaction">
    <interactant intactId="EBI-740220">
        <id>O14964</id>
    </interactant>
    <interactant intactId="EBI-11522539">
        <id>Q96MT8-3</id>
        <label>CEP63</label>
    </interactant>
    <organismsDiffer>false</organismsDiffer>
    <experiments>6</experiments>
</comment>
<comment type="interaction">
    <interactant intactId="EBI-740220">
        <id>O14964</id>
    </interactant>
    <interactant intactId="EBI-11975967">
        <id>Q76N32-2</id>
        <label>CEP68</label>
    </interactant>
    <organismsDiffer>false</organismsDiffer>
    <experiments>3</experiments>
</comment>
<comment type="interaction">
    <interactant intactId="EBI-740220">
        <id>O14964</id>
    </interactant>
    <interactant intactId="EBI-718615">
        <id>Q9H5F2</id>
        <label>CFAP68</label>
    </interactant>
    <organismsDiffer>false</organismsDiffer>
    <experiments>3</experiments>
</comment>
<comment type="interaction">
    <interactant intactId="EBI-740220">
        <id>O14964</id>
    </interactant>
    <interactant intactId="EBI-12811067">
        <id>Q6J272</id>
        <label>CIMIP2A</label>
    </interactant>
    <organismsDiffer>false</organismsDiffer>
    <experiments>3</experiments>
</comment>
<comment type="interaction">
    <interactant intactId="EBI-740220">
        <id>O14964</id>
    </interactant>
    <interactant intactId="EBI-720875">
        <id>Q96MW5</id>
        <label>COG8</label>
    </interactant>
    <organismsDiffer>false</organismsDiffer>
    <experiments>3</experiments>
</comment>
<comment type="interaction">
    <interactant intactId="EBI-740220">
        <id>O14964</id>
    </interactant>
    <interactant intactId="EBI-748171">
        <id>O43186</id>
        <label>CRX</label>
    </interactant>
    <organismsDiffer>false</organismsDiffer>
    <experiments>6</experiments>
</comment>
<comment type="interaction">
    <interactant intactId="EBI-740220">
        <id>O14964</id>
    </interactant>
    <interactant intactId="EBI-711360">
        <id>P33240</id>
        <label>CSTF2</label>
    </interactant>
    <organismsDiffer>false</organismsDiffer>
    <experiments>6</experiments>
</comment>
<comment type="interaction">
    <interactant intactId="EBI-740220">
        <id>O14964</id>
    </interactant>
    <interactant intactId="EBI-747012">
        <id>Q9H0L4</id>
        <label>CSTF2T</label>
    </interactant>
    <organismsDiffer>false</organismsDiffer>
    <experiments>3</experiments>
</comment>
<comment type="interaction">
    <interactant intactId="EBI-740220">
        <id>O14964</id>
    </interactant>
    <interactant intactId="EBI-1774273">
        <id>Q9P2B4</id>
        <label>CTTNBP2NL</label>
    </interactant>
    <organismsDiffer>false</organismsDiffer>
    <experiments>3</experiments>
</comment>
<comment type="interaction">
    <interactant intactId="EBI-740220">
        <id>O14964</id>
    </interactant>
    <interactant intactId="EBI-12102608">
        <id>Q6BCY4-2</id>
        <label>CYB5R2</label>
    </interactant>
    <organismsDiffer>false</organismsDiffer>
    <experiments>3</experiments>
</comment>
<comment type="interaction">
    <interactant intactId="EBI-740220">
        <id>O14964</id>
    </interactant>
    <interactant intactId="EBI-724310">
        <id>Q15038</id>
        <label>DAZAP2</label>
    </interactant>
    <organismsDiffer>false</organismsDiffer>
    <experiments>9</experiments>
</comment>
<comment type="interaction">
    <interactant intactId="EBI-740220">
        <id>O14964</id>
    </interactant>
    <interactant intactId="EBI-1001144">
        <id>Q9H410</id>
        <label>DSN1</label>
    </interactant>
    <organismsDiffer>false</organismsDiffer>
    <experiments>3</experiments>
</comment>
<comment type="interaction">
    <interactant intactId="EBI-740220">
        <id>O14964</id>
    </interactant>
    <interactant intactId="EBI-740376">
        <id>Q86UW9</id>
        <label>DTX2</label>
    </interactant>
    <organismsDiffer>false</organismsDiffer>
    <experiments>3</experiments>
</comment>
<comment type="interaction">
    <interactant intactId="EBI-740220">
        <id>O14964</id>
    </interactant>
    <interactant intactId="EBI-740680">
        <id>Q8WWB3</id>
        <label>DYDC1</label>
    </interactant>
    <organismsDiffer>false</organismsDiffer>
    <experiments>3</experiments>
</comment>
<comment type="interaction">
    <interactant intactId="EBI-740220">
        <id>O14964</id>
    </interactant>
    <interactant intactId="EBI-2349927">
        <id>Q5JST6</id>
        <label>EFHC2</label>
    </interactant>
    <organismsDiffer>false</organismsDiffer>
    <experiments>3</experiments>
</comment>
<comment type="interaction">
    <interactant intactId="EBI-740220">
        <id>O14964</id>
    </interactant>
    <interactant intactId="EBI-949532">
        <id>Q9UHF1</id>
        <label>EGFL7</label>
    </interactant>
    <organismsDiffer>false</organismsDiffer>
    <experiments>3</experiments>
</comment>
<comment type="interaction">
    <interactant intactId="EBI-740220">
        <id>O14964</id>
    </interactant>
    <interactant intactId="EBI-711990">
        <id>O00303</id>
        <label>EIF3F</label>
    </interactant>
    <organismsDiffer>false</organismsDiffer>
    <experiments>3</experiments>
</comment>
<comment type="interaction">
    <interactant intactId="EBI-740220">
        <id>O14964</id>
    </interactant>
    <interactant intactId="EBI-2813180">
        <id>Q86VI1</id>
        <label>EXOC3L1</label>
    </interactant>
    <organismsDiffer>false</organismsDiffer>
    <experiments>3</experiments>
</comment>
<comment type="interaction">
    <interactant intactId="EBI-740220">
        <id>O14964</id>
    </interactant>
    <interactant intactId="EBI-949824">
        <id>O00471</id>
        <label>EXOC5</label>
    </interactant>
    <organismsDiffer>false</organismsDiffer>
    <experiments>3</experiments>
</comment>
<comment type="interaction">
    <interactant intactId="EBI-740220">
        <id>O14964</id>
    </interactant>
    <interactant intactId="EBI-720048">
        <id>Q9UPT5</id>
        <label>EXOC7</label>
    </interactant>
    <organismsDiffer>false</organismsDiffer>
    <experiments>4</experiments>
</comment>
<comment type="interaction">
    <interactant intactId="EBI-740220">
        <id>O14964</id>
    </interactant>
    <interactant intactId="EBI-12807776">
        <id>O00167-2</id>
        <label>EYA2</label>
    </interactant>
    <organismsDiffer>false</organismsDiffer>
    <experiments>3</experiments>
</comment>
<comment type="interaction">
    <interactant intactId="EBI-740220">
        <id>O14964</id>
    </interactant>
    <interactant intactId="EBI-11978259">
        <id>Q92567-2</id>
        <label>FAM168A</label>
    </interactant>
    <organismsDiffer>false</organismsDiffer>
    <experiments>8</experiments>
</comment>
<comment type="interaction">
    <interactant intactId="EBI-740220">
        <id>O14964</id>
    </interactant>
    <interactant intactId="EBI-12842420">
        <id>Q8N0U4</id>
        <label>FAM185A</label>
    </interactant>
    <organismsDiffer>false</organismsDiffer>
    <experiments>3</experiments>
</comment>
<comment type="interaction">
    <interactant intactId="EBI-740220">
        <id>O14964</id>
    </interactant>
    <interactant intactId="EBI-10220102">
        <id>B7ZLH0</id>
        <label>FAM22F</label>
    </interactant>
    <organismsDiffer>false</organismsDiffer>
    <experiments>3</experiments>
</comment>
<comment type="interaction">
    <interactant intactId="EBI-740220">
        <id>O14964</id>
    </interactant>
    <interactant intactId="EBI-16433879">
        <id>A0A0S2Z4A7</id>
        <label>FANCG</label>
    </interactant>
    <organismsDiffer>false</organismsDiffer>
    <experiments>3</experiments>
</comment>
<comment type="interaction">
    <interactant intactId="EBI-740220">
        <id>O14964</id>
    </interactant>
    <interactant intactId="EBI-2505934">
        <id>P35555</id>
        <label>FBN1</label>
    </interactant>
    <organismsDiffer>false</organismsDiffer>
    <experiments>3</experiments>
</comment>
<comment type="interaction">
    <interactant intactId="EBI-740220">
        <id>O14964</id>
    </interactant>
    <interactant intactId="EBI-11958845">
        <id>O94868-3</id>
        <label>FCHSD2</label>
    </interactant>
    <organismsDiffer>false</organismsDiffer>
    <experiments>3</experiments>
</comment>
<comment type="interaction">
    <interactant intactId="EBI-740220">
        <id>O14964</id>
    </interactant>
    <interactant intactId="EBI-12297985">
        <id>Q5HY92</id>
        <label>FIGN</label>
    </interactant>
    <organismsDiffer>false</organismsDiffer>
    <experiments>3</experiments>
</comment>
<comment type="interaction">
    <interactant intactId="EBI-740220">
        <id>O14964</id>
    </interactant>
    <interactant intactId="EBI-744935">
        <id>Q9BVV2</id>
        <label>FNDC11</label>
    </interactant>
    <organismsDiffer>false</organismsDiffer>
    <experiments>3</experiments>
</comment>
<comment type="interaction">
    <interactant intactId="EBI-740220">
        <id>O14964</id>
    </interactant>
    <interactant intactId="EBI-11320806">
        <id>Q9NU39</id>
        <label>FOXD4L1</label>
    </interactant>
    <organismsDiffer>false</organismsDiffer>
    <experiments>3</experiments>
</comment>
<comment type="interaction">
    <interactant intactId="EBI-740220">
        <id>O14964</id>
    </interactant>
    <interactant intactId="EBI-12018822">
        <id>Q12951-2</id>
        <label>FOXI1</label>
    </interactant>
    <organismsDiffer>false</organismsDiffer>
    <experiments>3</experiments>
</comment>
<comment type="interaction">
    <interactant intactId="EBI-740220">
        <id>O14964</id>
    </interactant>
    <interactant intactId="EBI-5661036">
        <id>A1L4K1</id>
        <label>FSD2</label>
    </interactant>
    <organismsDiffer>false</organismsDiffer>
    <experiments>3</experiments>
</comment>
<comment type="interaction">
    <interactant intactId="EBI-740220">
        <id>O14964</id>
    </interactant>
    <interactant intactId="EBI-10192648">
        <id>O95954</id>
        <label>FTCD</label>
    </interactant>
    <organismsDiffer>false</organismsDiffer>
    <experiments>3</experiments>
</comment>
<comment type="interaction">
    <interactant intactId="EBI-740220">
        <id>O14964</id>
    </interactant>
    <interactant intactId="EBI-6929453">
        <id>O43716</id>
        <label>GATC</label>
    </interactant>
    <organismsDiffer>false</organismsDiffer>
    <experiments>3</experiments>
</comment>
<comment type="interaction">
    <interactant intactId="EBI-740220">
        <id>O14964</id>
    </interactant>
    <interactant intactId="EBI-618309">
        <id>Q08379</id>
        <label>GOLGA2</label>
    </interactant>
    <organismsDiffer>false</organismsDiffer>
    <experiments>3</experiments>
</comment>
<comment type="interaction">
    <interactant intactId="EBI-740220">
        <id>O14964</id>
    </interactant>
    <interactant intactId="EBI-5916454">
        <id>A6NEM1</id>
        <label>GOLGA6L9</label>
    </interactant>
    <organismsDiffer>false</organismsDiffer>
    <experiments>3</experiments>
</comment>
<comment type="interaction">
    <interactant intactId="EBI-740220">
        <id>O14964</id>
    </interactant>
    <interactant intactId="EBI-13310443">
        <id>Q2TAP0</id>
        <label>GOLGA7B</label>
    </interactant>
    <organismsDiffer>false</organismsDiffer>
    <experiments>3</experiments>
</comment>
<comment type="interaction">
    <interactant intactId="EBI-740220">
        <id>O14964</id>
    </interactant>
    <interactant intactId="EBI-23668738">
        <id>O95843</id>
        <label>GUCA1C</label>
    </interactant>
    <organismsDiffer>false</organismsDiffer>
    <experiments>3</experiments>
</comment>
<comment type="interaction">
    <interactant intactId="EBI-740220">
        <id>O14964</id>
    </interactant>
    <interactant intactId="EBI-712814">
        <id>P54257</id>
        <label>HAP1</label>
    </interactant>
    <organismsDiffer>false</organismsDiffer>
    <experiments>3</experiments>
</comment>
<comment type="interaction">
    <interactant intactId="EBI-740220">
        <id>O14964</id>
    </interactant>
    <interactant intactId="EBI-2514791">
        <id>Q96CS2</id>
        <label>HAUS1</label>
    </interactant>
    <organismsDiffer>false</organismsDiffer>
    <experiments>3</experiments>
</comment>
<comment type="interaction">
    <interactant intactId="EBI-740220">
        <id>O14964</id>
    </interactant>
    <interactant intactId="EBI-486809">
        <id>P52272</id>
        <label>HNRNPM</label>
    </interactant>
    <organismsDiffer>false</organismsDiffer>
    <experiments>3</experiments>
</comment>
<comment type="interaction">
    <interactant intactId="EBI-740220">
        <id>O14964</id>
    </interactant>
    <interactant intactId="EBI-12056251">
        <id>Q9ULV5-2</id>
        <label>HSF4</label>
    </interactant>
    <organismsDiffer>false</organismsDiffer>
    <experiments>3</experiments>
</comment>
<comment type="interaction">
    <interactant intactId="EBI-740220">
        <id>O14964</id>
    </interactant>
    <interactant intactId="EBI-3957665">
        <id>Q96LI6</id>
        <label>HSFY2</label>
    </interactant>
    <organismsDiffer>false</organismsDiffer>
    <experiments>3</experiments>
</comment>
<comment type="interaction">
    <interactant intactId="EBI-740220">
        <id>O14964</id>
    </interactant>
    <interactant intactId="EBI-12141931">
        <id>Q8NDH6-2</id>
        <label>ICA1L</label>
    </interactant>
    <organismsDiffer>false</organismsDiffer>
    <experiments>3</experiments>
</comment>
<comment type="interaction">
    <interactant intactId="EBI-740220">
        <id>O14964</id>
    </interactant>
    <interactant intactId="EBI-7055360">
        <id>P05015</id>
        <label>IFNA16</label>
    </interactant>
    <organismsDiffer>false</organismsDiffer>
    <experiments>3</experiments>
</comment>
<comment type="interaction">
    <interactant intactId="EBI-740220">
        <id>O14964</id>
    </interactant>
    <interactant intactId="EBI-12066130">
        <id>Q96LB3-2</id>
        <label>IFT74</label>
    </interactant>
    <organismsDiffer>false</organismsDiffer>
    <experiments>3</experiments>
</comment>
<comment type="interaction">
    <interactant intactId="EBI-740220">
        <id>O14964</id>
    </interactant>
    <interactant intactId="EBI-488533">
        <id>Q8WYH8</id>
        <label>ING5</label>
    </interactant>
    <organismsDiffer>false</organismsDiffer>
    <experiments>6</experiments>
</comment>
<comment type="interaction">
    <interactant intactId="EBI-740220">
        <id>O14964</id>
    </interactant>
    <interactant intactId="EBI-5663129">
        <id>Q96HW7</id>
        <label>INTS4</label>
    </interactant>
    <organismsDiffer>false</organismsDiffer>
    <experiments>4</experiments>
</comment>
<comment type="interaction">
    <interactant intactId="EBI-740220">
        <id>O14964</id>
    </interactant>
    <interactant intactId="EBI-16438029">
        <id>Q96HW7-2</id>
        <label>INTS4</label>
    </interactant>
    <organismsDiffer>false</organismsDiffer>
    <experiments>3</experiments>
</comment>
<comment type="interaction">
    <interactant intactId="EBI-740220">
        <id>O14964</id>
    </interactant>
    <interactant intactId="EBI-395967">
        <id>Q8TEX9</id>
        <label>IPO4</label>
    </interactant>
    <organismsDiffer>false</organismsDiffer>
    <experiments>5</experiments>
</comment>
<comment type="interaction">
    <interactant intactId="EBI-740220">
        <id>O14964</id>
    </interactant>
    <interactant intactId="EBI-752007">
        <id>Q96AA8</id>
        <label>JAKMIP2</label>
    </interactant>
    <organismsDiffer>false</organismsDiffer>
    <experiments>3</experiments>
</comment>
<comment type="interaction">
    <interactant intactId="EBI-740220">
        <id>O14964</id>
    </interactant>
    <interactant intactId="EBI-9090173">
        <id>P0C870</id>
        <label>JMJD7</label>
    </interactant>
    <organismsDiffer>false</organismsDiffer>
    <experiments>3</experiments>
</comment>
<comment type="interaction">
    <interactant intactId="EBI-740220">
        <id>O14964</id>
    </interactant>
    <interactant intactId="EBI-2805604">
        <id>Q2KHM9</id>
        <label>KIAA0753</label>
    </interactant>
    <organismsDiffer>false</organismsDiffer>
    <experiments>3</experiments>
</comment>
<comment type="interaction">
    <interactant intactId="EBI-740220">
        <id>O14964</id>
    </interactant>
    <interactant intactId="EBI-17702098">
        <id>Q8IV33</id>
        <label>KIAA0825</label>
    </interactant>
    <organismsDiffer>false</organismsDiffer>
    <experiments>3</experiments>
</comment>
<comment type="interaction">
    <interactant intactId="EBI-740220">
        <id>O14964</id>
    </interactant>
    <interactant intactId="EBI-7232405">
        <id>O43474</id>
        <label>KLF4</label>
    </interactant>
    <organismsDiffer>false</organismsDiffer>
    <experiments>3</experiments>
</comment>
<comment type="interaction">
    <interactant intactId="EBI-740220">
        <id>O14964</id>
    </interactant>
    <interactant intactId="EBI-1223876">
        <id>P13646</id>
        <label>KRT13</label>
    </interactant>
    <organismsDiffer>false</organismsDiffer>
    <experiments>6</experiments>
</comment>
<comment type="interaction">
    <interactant intactId="EBI-740220">
        <id>O14964</id>
    </interactant>
    <interactant intactId="EBI-702178">
        <id>P02533</id>
        <label>KRT14</label>
    </interactant>
    <organismsDiffer>false</organismsDiffer>
    <experiments>3</experiments>
</comment>
<comment type="interaction">
    <interactant intactId="EBI-740220">
        <id>O14964</id>
    </interactant>
    <interactant intactId="EBI-739566">
        <id>P19012</id>
        <label>KRT15</label>
    </interactant>
    <organismsDiffer>false</organismsDiffer>
    <experiments>6</experiments>
</comment>
<comment type="interaction">
    <interactant intactId="EBI-740220">
        <id>O14964</id>
    </interactant>
    <interactant intactId="EBI-356410">
        <id>P08779</id>
        <label>KRT16</label>
    </interactant>
    <organismsDiffer>false</organismsDiffer>
    <experiments>3</experiments>
</comment>
<comment type="interaction">
    <interactant intactId="EBI-740220">
        <id>O14964</id>
    </interactant>
    <interactant intactId="EBI-297888">
        <id>P05783</id>
        <label>KRT18</label>
    </interactant>
    <organismsDiffer>false</organismsDiffer>
    <experiments>7</experiments>
</comment>
<comment type="interaction">
    <interactant intactId="EBI-740220">
        <id>O14964</id>
    </interactant>
    <interactant intactId="EBI-742756">
        <id>P08727</id>
        <label>KRT19</label>
    </interactant>
    <organismsDiffer>false</organismsDiffer>
    <experiments>4</experiments>
</comment>
<comment type="interaction">
    <interactant intactId="EBI-740220">
        <id>O14964</id>
    </interactant>
    <interactant intactId="EBI-2952736">
        <id>Q2M2I5</id>
        <label>KRT24</label>
    </interactant>
    <organismsDiffer>false</organismsDiffer>
    <experiments>3</experiments>
</comment>
<comment type="interaction">
    <interactant intactId="EBI-740220">
        <id>O14964</id>
    </interactant>
    <interactant intactId="EBI-11980019">
        <id>Q7Z3Z0</id>
        <label>KRT25</label>
    </interactant>
    <organismsDiffer>false</organismsDiffer>
    <experiments>3</experiments>
</comment>
<comment type="interaction">
    <interactant intactId="EBI-740220">
        <id>O14964</id>
    </interactant>
    <interactant intactId="EBI-12084444">
        <id>Q7Z3Y9</id>
        <label>KRT26</label>
    </interactant>
    <organismsDiffer>false</organismsDiffer>
    <experiments>5</experiments>
</comment>
<comment type="interaction">
    <interactant intactId="EBI-740220">
        <id>O14964</id>
    </interactant>
    <interactant intactId="EBI-3044087">
        <id>Q7Z3Y8</id>
        <label>KRT27</label>
    </interactant>
    <organismsDiffer>false</organismsDiffer>
    <experiments>3</experiments>
</comment>
<comment type="interaction">
    <interactant intactId="EBI-740220">
        <id>O14964</id>
    </interactant>
    <interactant intactId="EBI-2430095">
        <id>P12035</id>
        <label>KRT3</label>
    </interactant>
    <organismsDiffer>false</organismsDiffer>
    <experiments>3</experiments>
</comment>
<comment type="interaction">
    <interactant intactId="EBI-740220">
        <id>O14964</id>
    </interactant>
    <interactant intactId="EBI-948001">
        <id>Q15323</id>
        <label>KRT31</label>
    </interactant>
    <organismsDiffer>false</organismsDiffer>
    <experiments>7</experiments>
</comment>
<comment type="interaction">
    <interactant intactId="EBI-740220">
        <id>O14964</id>
    </interactant>
    <interactant intactId="EBI-1049638">
        <id>Q14525</id>
        <label>KRT33B</label>
    </interactant>
    <organismsDiffer>false</organismsDiffer>
    <experiments>6</experiments>
</comment>
<comment type="interaction">
    <interactant intactId="EBI-740220">
        <id>O14964</id>
    </interactant>
    <interactant intactId="EBI-1047093">
        <id>O76011</id>
        <label>KRT34</label>
    </interactant>
    <organismsDiffer>false</organismsDiffer>
    <experiments>3</experiments>
</comment>
<comment type="interaction">
    <interactant intactId="EBI-740220">
        <id>O14964</id>
    </interactant>
    <interactant intactId="EBI-1058674">
        <id>Q92764</id>
        <label>KRT35</label>
    </interactant>
    <organismsDiffer>false</organismsDiffer>
    <experiments>3</experiments>
</comment>
<comment type="interaction">
    <interactant intactId="EBI-740220">
        <id>O14964</id>
    </interactant>
    <interactant intactId="EBI-11958506">
        <id>O76013-2</id>
        <label>KRT36</label>
    </interactant>
    <organismsDiffer>false</organismsDiffer>
    <experiments>3</experiments>
</comment>
<comment type="interaction">
    <interactant intactId="EBI-740220">
        <id>O14964</id>
    </interactant>
    <interactant intactId="EBI-1045716">
        <id>O76014</id>
        <label>KRT37</label>
    </interactant>
    <organismsDiffer>false</organismsDiffer>
    <experiments>3</experiments>
</comment>
<comment type="interaction">
    <interactant intactId="EBI-740220">
        <id>O14964</id>
    </interactant>
    <interactant intactId="EBI-1047263">
        <id>O76015</id>
        <label>KRT38</label>
    </interactant>
    <organismsDiffer>false</organismsDiffer>
    <experiments>6</experiments>
</comment>
<comment type="interaction">
    <interactant intactId="EBI-740220">
        <id>O14964</id>
    </interactant>
    <interactant intactId="EBI-11958242">
        <id>Q6A163</id>
        <label>KRT39</label>
    </interactant>
    <organismsDiffer>false</organismsDiffer>
    <experiments>3</experiments>
</comment>
<comment type="interaction">
    <interactant intactId="EBI-740220">
        <id>O14964</id>
    </interactant>
    <interactant intactId="EBI-10171697">
        <id>Q6A162</id>
        <label>KRT40</label>
    </interactant>
    <organismsDiffer>false</organismsDiffer>
    <experiments>6</experiments>
</comment>
<comment type="interaction">
    <interactant intactId="EBI-740220">
        <id>O14964</id>
    </interactant>
    <interactant intactId="EBI-702198">
        <id>P02538</id>
        <label>KRT6A</label>
    </interactant>
    <organismsDiffer>false</organismsDiffer>
    <experiments>6</experiments>
</comment>
<comment type="interaction">
    <interactant intactId="EBI-740220">
        <id>O14964</id>
    </interactant>
    <interactant intactId="EBI-2949715">
        <id>O95678</id>
        <label>KRT75</label>
    </interactant>
    <organismsDiffer>false</organismsDiffer>
    <experiments>3</experiments>
</comment>
<comment type="interaction">
    <interactant intactId="EBI-740220">
        <id>O14964</id>
    </interactant>
    <interactant intactId="EBI-2952745">
        <id>Q01546</id>
        <label>KRT76</label>
    </interactant>
    <organismsDiffer>false</organismsDiffer>
    <experiments>3</experiments>
</comment>
<comment type="interaction">
    <interactant intactId="EBI-740220">
        <id>O14964</id>
    </interactant>
    <interactant intactId="EBI-1045341">
        <id>Q9NSB4</id>
        <label>KRT82</label>
    </interactant>
    <organismsDiffer>false</organismsDiffer>
    <experiments>3</experiments>
</comment>
<comment type="interaction">
    <interactant intactId="EBI-740220">
        <id>O14964</id>
    </interactant>
    <interactant intactId="EBI-9996498">
        <id>O43790</id>
        <label>KRT86</label>
    </interactant>
    <organismsDiffer>false</organismsDiffer>
    <experiments>3</experiments>
</comment>
<comment type="interaction">
    <interactant intactId="EBI-740220">
        <id>O14964</id>
    </interactant>
    <interactant intactId="EBI-1048945">
        <id>Q3LI72</id>
        <label>KRTAP19-5</label>
    </interactant>
    <organismsDiffer>false</organismsDiffer>
    <experiments>3</experiments>
</comment>
<comment type="interaction">
    <interactant intactId="EBI-740220">
        <id>O14964</id>
    </interactant>
    <interactant intactId="EBI-3957672">
        <id>Q6PEX3</id>
        <label>KRTAP26-1</label>
    </interactant>
    <organismsDiffer>false</organismsDiffer>
    <experiments>3</experiments>
</comment>
<comment type="interaction">
    <interactant intactId="EBI-740220">
        <id>O14964</id>
    </interactant>
    <interactant intactId="EBI-18394498">
        <id>Q8IUC3</id>
        <label>KRTAP7-1</label>
    </interactant>
    <organismsDiffer>false</organismsDiffer>
    <experiments>3</experiments>
</comment>
<comment type="interaction">
    <interactant intactId="EBI-740220">
        <id>O14964</id>
    </interactant>
    <interactant intactId="EBI-9088686">
        <id>Q14847-2</id>
        <label>LASP1</label>
    </interactant>
    <organismsDiffer>false</organismsDiffer>
    <experiments>3</experiments>
</comment>
<comment type="interaction">
    <interactant intactId="EBI-740220">
        <id>O14964</id>
    </interactant>
    <interactant intactId="EBI-740738">
        <id>O95751</id>
        <label>LDOC1</label>
    </interactant>
    <organismsDiffer>false</organismsDiffer>
    <experiments>10</experiments>
</comment>
<comment type="interaction">
    <interactant intactId="EBI-740220">
        <id>O14964</id>
    </interactant>
    <interactant intactId="EBI-725647">
        <id>Q99732</id>
        <label>LITAF</label>
    </interactant>
    <organismsDiffer>false</organismsDiffer>
    <experiments>8</experiments>
</comment>
<comment type="interaction">
    <interactant intactId="EBI-740220">
        <id>O14964</id>
    </interactant>
    <interactant intactId="EBI-8639312">
        <id>P25800</id>
        <label>LMO1</label>
    </interactant>
    <organismsDiffer>false</organismsDiffer>
    <experiments>3</experiments>
</comment>
<comment type="interaction">
    <interactant intactId="EBI-740220">
        <id>O14964</id>
    </interactant>
    <interactant intactId="EBI-2798728">
        <id>P61968</id>
        <label>LMO4</label>
    </interactant>
    <organismsDiffer>false</organismsDiffer>
    <experiments>3</experiments>
</comment>
<comment type="interaction">
    <interactant intactId="EBI-740220">
        <id>O14964</id>
    </interactant>
    <interactant intactId="EBI-2350424">
        <id>Q9BV99</id>
        <label>LRRC61</label>
    </interactant>
    <organismsDiffer>false</organismsDiffer>
    <experiments>3</experiments>
</comment>
<comment type="interaction">
    <interactant intactId="EBI-740220">
        <id>O14964</id>
    </interactant>
    <interactant intactId="EBI-741355">
        <id>Q96LR2</id>
        <label>LURAP1</label>
    </interactant>
    <organismsDiffer>false</organismsDiffer>
    <experiments>4</experiments>
</comment>
<comment type="interaction">
    <interactant intactId="EBI-740220">
        <id>O14964</id>
    </interactant>
    <interactant intactId="EBI-751857">
        <id>O15481</id>
        <label>MAGEB4</label>
    </interactant>
    <organismsDiffer>false</organismsDiffer>
    <experiments>3</experiments>
</comment>
<comment type="interaction">
    <interactant intactId="EBI-740220">
        <id>O14964</id>
    </interactant>
    <interactant intactId="EBI-716006">
        <id>Q9Y5V3</id>
        <label>MAGED1</label>
    </interactant>
    <organismsDiffer>false</organismsDiffer>
    <experiments>6</experiments>
</comment>
<comment type="interaction">
    <interactant intactId="EBI-740220">
        <id>O14964</id>
    </interactant>
    <interactant intactId="EBI-741424">
        <id>Q8NDC0</id>
        <label>MAPK1IP1L</label>
    </interactant>
    <organismsDiffer>false</organismsDiffer>
    <experiments>6</experiments>
</comment>
<comment type="interaction">
    <interactant intactId="EBI-740220">
        <id>O14964</id>
    </interactant>
    <interactant intactId="EBI-394678">
        <id>Q13503</id>
        <label>MED21</label>
    </interactant>
    <organismsDiffer>false</organismsDiffer>
    <experiments>3</experiments>
</comment>
<comment type="interaction">
    <interactant intactId="EBI-740220">
        <id>O14964</id>
    </interactant>
    <interactant intactId="EBI-12954271">
        <id>Q15528-2</id>
        <label>MED22</label>
    </interactant>
    <organismsDiffer>false</organismsDiffer>
    <experiments>3</experiments>
</comment>
<comment type="interaction">
    <interactant intactId="EBI-740220">
        <id>O14964</id>
    </interactant>
    <interactant intactId="EBI-394558">
        <id>Q71SY5</id>
        <label>MED25</label>
    </interactant>
    <organismsDiffer>false</organismsDiffer>
    <experiments>3</experiments>
</comment>
<comment type="interaction">
    <interactant intactId="EBI-740220">
        <id>O14964</id>
    </interactant>
    <interactant intactId="EBI-394659">
        <id>Q96HR3</id>
        <label>MED30</label>
    </interactant>
    <organismsDiffer>false</organismsDiffer>
    <experiments>5</experiments>
</comment>
<comment type="interaction">
    <interactant intactId="EBI-740220">
        <id>O14964</id>
    </interactant>
    <interactant intactId="EBI-394607">
        <id>Q9NPJ6</id>
        <label>MED4</label>
    </interactant>
    <organismsDiffer>false</organismsDiffer>
    <experiments>3</experiments>
</comment>
<comment type="interaction">
    <interactant intactId="EBI-740220">
        <id>O14964</id>
    </interactant>
    <interactant intactId="EBI-394632">
        <id>O43513</id>
        <label>MED7</label>
    </interactant>
    <organismsDiffer>false</organismsDiffer>
    <experiments>4</experiments>
</comment>
<comment type="interaction">
    <interactant intactId="EBI-740220">
        <id>O14964</id>
    </interactant>
    <interactant intactId="EBI-18582591">
        <id>Q99687-3</id>
        <label>MEIS3</label>
    </interactant>
    <organismsDiffer>false</organismsDiffer>
    <experiments>3</experiments>
</comment>
<comment type="interaction">
    <interactant intactId="EBI-740220">
        <id>O14964</id>
    </interactant>
    <interactant intactId="EBI-8487781">
        <id>Q8N6F8</id>
        <label>METTL27</label>
    </interactant>
    <organismsDiffer>false</organismsDiffer>
    <experiments>3</experiments>
</comment>
<comment type="interaction">
    <interactant intactId="EBI-740220">
        <id>O14964</id>
    </interactant>
    <interactant intactId="EBI-373498">
        <id>A9UHW6</id>
        <label>MIF4GD</label>
    </interactant>
    <organismsDiffer>false</organismsDiffer>
    <experiments>5</experiments>
</comment>
<comment type="interaction">
    <interactant intactId="EBI-740220">
        <id>O14964</id>
    </interactant>
    <interactant intactId="EBI-9118295">
        <id>A9UHW6-2</id>
        <label>MIF4GD</label>
    </interactant>
    <organismsDiffer>false</organismsDiffer>
    <experiments>6</experiments>
</comment>
<comment type="interaction">
    <interactant intactId="EBI-740220">
        <id>O14964</id>
    </interactant>
    <interactant intactId="EBI-2340269">
        <id>Q13064</id>
        <label>MKRN3</label>
    </interactant>
    <organismsDiffer>false</organismsDiffer>
    <experiments>3</experiments>
</comment>
<comment type="interaction">
    <interactant intactId="EBI-740220">
        <id>O14964</id>
    </interactant>
    <interactant intactId="EBI-748896">
        <id>Q96HT8</id>
        <label>MRFAP1L1</label>
    </interactant>
    <organismsDiffer>false</organismsDiffer>
    <experiments>6</experiments>
</comment>
<comment type="interaction">
    <interactant intactId="EBI-740220">
        <id>O14964</id>
    </interactant>
    <interactant intactId="EBI-748610">
        <id>Q6IA69</id>
        <label>NADSYN1</label>
    </interactant>
    <organismsDiffer>false</organismsDiffer>
    <experiments>3</experiments>
</comment>
<comment type="interaction">
    <interactant intactId="EBI-740220">
        <id>O14964</id>
    </interactant>
    <interactant intactId="EBI-715849">
        <id>O14777</id>
        <label>NDC80</label>
    </interactant>
    <organismsDiffer>false</organismsDiffer>
    <experiments>6</experiments>
</comment>
<comment type="interaction">
    <interactant intactId="EBI-740220">
        <id>O14964</id>
    </interactant>
    <interactant intactId="EBI-1246371">
        <id>O96000</id>
        <label>NDUFB10</label>
    </interactant>
    <organismsDiffer>false</organismsDiffer>
    <experiments>3</experiments>
</comment>
<comment type="interaction">
    <interactant intactId="EBI-740220">
        <id>O14964</id>
    </interactant>
    <interactant intactId="EBI-10178578">
        <id>I6L9F6</id>
        <label>NEFL</label>
    </interactant>
    <organismsDiffer>false</organismsDiffer>
    <experiments>3</experiments>
</comment>
<comment type="interaction">
    <interactant intactId="EBI-740220">
        <id>O14964</id>
    </interactant>
    <interactant intactId="EBI-1014472">
        <id>P35240</id>
        <label>NF2</label>
    </interactant>
    <organismsDiffer>false</organismsDiffer>
    <experiments>7</experiments>
</comment>
<comment type="interaction">
    <interactant intactId="EBI-740220">
        <id>O14964</id>
    </interactant>
    <interactant intactId="EBI-1014514">
        <id>P35240-4</id>
        <label>NF2</label>
    </interactant>
    <organismsDiffer>false</organismsDiffer>
    <experiments>4</experiments>
</comment>
<comment type="interaction">
    <interactant intactId="EBI-740220">
        <id>O14964</id>
    </interactant>
    <interactant intactId="EBI-11956831">
        <id>Q13952-2</id>
        <label>NFYC</label>
    </interactant>
    <organismsDiffer>false</organismsDiffer>
    <experiments>3</experiments>
</comment>
<comment type="interaction">
    <interactant intactId="EBI-740220">
        <id>O14964</id>
    </interactant>
    <interactant intactId="EBI-372942">
        <id>Q13287</id>
        <label>NMI</label>
    </interactant>
    <organismsDiffer>false</organismsDiffer>
    <experiments>10</experiments>
</comment>
<comment type="interaction">
    <interactant intactId="EBI-740220">
        <id>O14964</id>
    </interactant>
    <interactant intactId="EBI-741048">
        <id>Q7Z3B4</id>
        <label>NUP54</label>
    </interactant>
    <organismsDiffer>false</organismsDiffer>
    <experiments>7</experiments>
</comment>
<comment type="interaction">
    <interactant intactId="EBI-740220">
        <id>O14964</id>
    </interactant>
    <interactant intactId="EBI-347978">
        <id>P37198</id>
        <label>NUP62</label>
    </interactant>
    <organismsDiffer>false</organismsDiffer>
    <experiments>3</experiments>
</comment>
<comment type="interaction">
    <interactant intactId="EBI-740220">
        <id>O14964</id>
    </interactant>
    <interactant intactId="EBI-10173858">
        <id>Q96M63</id>
        <label>ODAD1</label>
    </interactant>
    <organismsDiffer>false</organismsDiffer>
    <experiments>10</experiments>
</comment>
<comment type="interaction">
    <interactant intactId="EBI-740220">
        <id>O14964</id>
    </interactant>
    <interactant intactId="EBI-5774125">
        <id>A1E959</id>
        <label>ODAM</label>
    </interactant>
    <organismsDiffer>false</organismsDiffer>
    <experiments>3</experiments>
</comment>
<comment type="interaction">
    <interactant intactId="EBI-740220">
        <id>O14964</id>
    </interactant>
    <interactant intactId="EBI-536879">
        <id>O43482</id>
        <label>OIP5</label>
    </interactant>
    <organismsDiffer>false</organismsDiffer>
    <experiments>3</experiments>
</comment>
<comment type="interaction">
    <interactant intactId="EBI-740220">
        <id>O14964</id>
    </interactant>
    <interactant intactId="EBI-10181968">
        <id>Q7Z4N8</id>
        <label>P4HA3</label>
    </interactant>
    <organismsDiffer>false</organismsDiffer>
    <experiments>6</experiments>
</comment>
<comment type="interaction">
    <interactant intactId="EBI-740220">
        <id>O14964</id>
    </interactant>
    <interactant intactId="EBI-296331">
        <id>Q02548</id>
        <label>PAX5</label>
    </interactant>
    <organismsDiffer>false</organismsDiffer>
    <experiments>3</experiments>
</comment>
<comment type="interaction">
    <interactant intactId="EBI-740220">
        <id>O14964</id>
    </interactant>
    <interactant intactId="EBI-747278">
        <id>P26367</id>
        <label>PAX6</label>
    </interactant>
    <organismsDiffer>false</organismsDiffer>
    <experiments>3</experiments>
</comment>
<comment type="interaction">
    <interactant intactId="EBI-740220">
        <id>O14964</id>
    </interactant>
    <interactant intactId="EBI-724639">
        <id>Q9UBV8</id>
        <label>PEF1</label>
    </interactant>
    <organismsDiffer>false</organismsDiffer>
    <experiments>3</experiments>
</comment>
<comment type="interaction">
    <interactant intactId="EBI-740220">
        <id>O14964</id>
    </interactant>
    <interactant intactId="EBI-2692890">
        <id>Q96KN3</id>
        <label>PKNOX2</label>
    </interactant>
    <organismsDiffer>false</organismsDiffer>
    <experiments>3</experiments>
</comment>
<comment type="interaction">
    <interactant intactId="EBI-740220">
        <id>O14964</id>
    </interactant>
    <interactant intactId="EBI-726466">
        <id>O15496</id>
        <label>PLA2G10</label>
    </interactant>
    <organismsDiffer>false</organismsDiffer>
    <experiments>3</experiments>
</comment>
<comment type="interaction">
    <interactant intactId="EBI-740220">
        <id>O14964</id>
    </interactant>
    <interactant intactId="EBI-12387058">
        <id>Q9HDD0</id>
        <label>PLAAT1</label>
    </interactant>
    <organismsDiffer>false</organismsDiffer>
    <experiments>3</experiments>
</comment>
<comment type="interaction">
    <interactant intactId="EBI-740220">
        <id>O14964</id>
    </interactant>
    <interactant intactId="EBI-4405387">
        <id>P51178</id>
        <label>PLCD1</label>
    </interactant>
    <organismsDiffer>false</organismsDiffer>
    <experiments>3</experiments>
</comment>
<comment type="interaction">
    <interactant intactId="EBI-740220">
        <id>O14964</id>
    </interactant>
    <interactant intactId="EBI-373552">
        <id>Q96CS7</id>
        <label>PLEKHB2</label>
    </interactant>
    <organismsDiffer>false</organismsDiffer>
    <experiments>3</experiments>
</comment>
<comment type="interaction">
    <interactant intactId="EBI-740220">
        <id>O14964</id>
    </interactant>
    <interactant intactId="EBI-1389308">
        <id>Q7Z3K3</id>
        <label>POGZ</label>
    </interactant>
    <organismsDiffer>false</organismsDiffer>
    <experiments>6</experiments>
</comment>
<comment type="interaction">
    <interactant intactId="EBI-740220">
        <id>O14964</id>
    </interactant>
    <interactant intactId="EBI-943588">
        <id>Q16633</id>
        <label>POU2AF1</label>
    </interactant>
    <organismsDiffer>false</organismsDiffer>
    <experiments>5</experiments>
</comment>
<comment type="interaction">
    <interactant intactId="EBI-740220">
        <id>O14964</id>
    </interactant>
    <interactant intactId="EBI-12029004">
        <id>P78424</id>
        <label>POU6F2</label>
    </interactant>
    <organismsDiffer>false</organismsDiffer>
    <experiments>3</experiments>
</comment>
<comment type="interaction">
    <interactant intactId="EBI-740220">
        <id>O14964</id>
    </interactant>
    <interactant intactId="EBI-2479826">
        <id>Q9Y5P8</id>
        <label>PPP2R3B</label>
    </interactant>
    <organismsDiffer>false</organismsDiffer>
    <experiments>3</experiments>
</comment>
<comment type="interaction">
    <interactant intactId="EBI-740220">
        <id>O14964</id>
    </interactant>
    <interactant intactId="EBI-12944296">
        <id>P85299-2</id>
        <label>PRR5</label>
    </interactant>
    <organismsDiffer>false</organismsDiffer>
    <experiments>3</experiments>
</comment>
<comment type="interaction">
    <interactant intactId="EBI-740220">
        <id>O14964</id>
    </interactant>
    <interactant intactId="EBI-19951687">
        <id>A5LHX3</id>
        <label>PSMB11</label>
    </interactant>
    <organismsDiffer>false</organismsDiffer>
    <experiments>3</experiments>
</comment>
<comment type="interaction">
    <interactant intactId="EBI-740220">
        <id>O14964</id>
    </interactant>
    <interactant intactId="EBI-603350">
        <id>P28070</id>
        <label>PSMB4</label>
    </interactant>
    <organismsDiffer>false</organismsDiffer>
    <experiments>3</experiments>
</comment>
<comment type="interaction">
    <interactant intactId="EBI-740220">
        <id>O14964</id>
    </interactant>
    <interactant intactId="EBI-2933362">
        <id>Q9H2L5</id>
        <label>RASSF4</label>
    </interactant>
    <organismsDiffer>false</organismsDiffer>
    <experiments>3</experiments>
</comment>
<comment type="interaction">
    <interactant intactId="EBI-740220">
        <id>O14964</id>
    </interactant>
    <interactant intactId="EBI-12936957">
        <id>P35250-2</id>
        <label>RFC2</label>
    </interactant>
    <organismsDiffer>false</organismsDiffer>
    <experiments>3</experiments>
</comment>
<comment type="interaction">
    <interactant intactId="EBI-740220">
        <id>O14964</id>
    </interactant>
    <interactant intactId="EBI-746118">
        <id>Q8HWS3</id>
        <label>RFX6</label>
    </interactant>
    <organismsDiffer>false</organismsDiffer>
    <experiments>3</experiments>
</comment>
<comment type="interaction">
    <interactant intactId="EBI-740220">
        <id>O14964</id>
    </interactant>
    <interactant intactId="EBI-2340927">
        <id>P78317</id>
        <label>RNF4</label>
    </interactant>
    <organismsDiffer>false</organismsDiffer>
    <experiments>3</experiments>
</comment>
<comment type="interaction">
    <interactant intactId="EBI-740220">
        <id>O14964</id>
    </interactant>
    <interactant intactId="EBI-12840198">
        <id>Q96P16-3</id>
        <label>RPRD1A</label>
    </interactant>
    <organismsDiffer>false</organismsDiffer>
    <experiments>3</experiments>
</comment>
<comment type="interaction">
    <interactant intactId="EBI-740220">
        <id>O14964</id>
    </interactant>
    <interactant intactId="EBI-12821217">
        <id>Q2I0M5</id>
        <label>RSPO4</label>
    </interactant>
    <organismsDiffer>false</organismsDiffer>
    <experiments>3</experiments>
</comment>
<comment type="interaction">
    <interactant intactId="EBI-740220">
        <id>O14964</id>
    </interactant>
    <interactant intactId="EBI-12001422">
        <id>Q01196-8</id>
        <label>RUNX1</label>
    </interactant>
    <organismsDiffer>false</organismsDiffer>
    <experiments>3</experiments>
</comment>
<comment type="interaction">
    <interactant intactId="EBI-740220">
        <id>O14964</id>
    </interactant>
    <interactant intactId="EBI-13072754">
        <id>Q5SSQ6-2</id>
        <label>SAPCD1</label>
    </interactant>
    <organismsDiffer>false</organismsDiffer>
    <experiments>3</experiments>
</comment>
<comment type="interaction">
    <interactant intactId="EBI-740220">
        <id>O14964</id>
    </interactant>
    <interactant intactId="EBI-12000762">
        <id>Q7Z5V6-2</id>
        <label>SAXO4</label>
    </interactant>
    <organismsDiffer>false</organismsDiffer>
    <experiments>6</experiments>
</comment>
<comment type="interaction">
    <interactant intactId="EBI-740220">
        <id>O14964</id>
    </interactant>
    <interactant intactId="EBI-12844598">
        <id>P09683</id>
        <label>SCT</label>
    </interactant>
    <organismsDiffer>false</organismsDiffer>
    <experiments>3</experiments>
</comment>
<comment type="interaction">
    <interactant intactId="EBI-740220">
        <id>O14964</id>
    </interactant>
    <interactant intactId="EBI-17859611">
        <id>P20132</id>
        <label>SDS</label>
    </interactant>
    <organismsDiffer>false</organismsDiffer>
    <experiments>3</experiments>
</comment>
<comment type="interaction">
    <interactant intactId="EBI-740220">
        <id>O14964</id>
    </interactant>
    <interactant intactId="EBI-465368">
        <id>Q9UGK8</id>
        <label>SERGEF</label>
    </interactant>
    <organismsDiffer>false</organismsDiffer>
    <experiments>3</experiments>
</comment>
<comment type="interaction">
    <interactant intactId="EBI-740220">
        <id>O14964</id>
    </interactant>
    <interactant intactId="EBI-748621">
        <id>Q9UJW9</id>
        <label>SERTAD3</label>
    </interactant>
    <organismsDiffer>false</organismsDiffer>
    <experiments>3</experiments>
</comment>
<comment type="interaction">
    <interactant intactId="EBI-740220">
        <id>O14964</id>
    </interactant>
    <interactant intactId="EBI-358436">
        <id>Q12824-2</id>
        <label>SMARCB1</label>
    </interactant>
    <organismsDiffer>false</organismsDiffer>
    <experiments>3</experiments>
</comment>
<comment type="interaction">
    <interactant intactId="EBI-740220">
        <id>O14964</id>
    </interactant>
    <interactant intactId="EBI-751422">
        <id>Q9UNH6</id>
        <label>SNX7</label>
    </interactant>
    <organismsDiffer>false</organismsDiffer>
    <experiments>3</experiments>
</comment>
<comment type="interaction">
    <interactant intactId="EBI-740220">
        <id>O14964</id>
    </interactant>
    <interactant intactId="EBI-741237">
        <id>O60504</id>
        <label>SORBS3</label>
    </interactant>
    <organismsDiffer>false</organismsDiffer>
    <experiments>3</experiments>
</comment>
<comment type="interaction">
    <interactant intactId="EBI-740220">
        <id>O14964</id>
    </interactant>
    <interactant intactId="EBI-10696971">
        <id>Q7Z6I5</id>
        <label>SPATA12</label>
    </interactant>
    <organismsDiffer>false</organismsDiffer>
    <experiments>3</experiments>
</comment>
<comment type="interaction">
    <interactant intactId="EBI-740220">
        <id>O14964</id>
    </interactant>
    <interactant intactId="EBI-999909">
        <id>Q9HBM1</id>
        <label>SPC25</label>
    </interactant>
    <organismsDiffer>false</organismsDiffer>
    <experiments>3</experiments>
</comment>
<comment type="interaction">
    <interactant intactId="EBI-740220">
        <id>O14964</id>
    </interactant>
    <interactant intactId="EBI-10963872">
        <id>Q8WWL2-2</id>
        <label>SPIRE2</label>
    </interactant>
    <organismsDiffer>false</organismsDiffer>
    <experiments>3</experiments>
</comment>
<comment type="interaction">
    <interactant intactId="EBI-740220">
        <id>O14964</id>
    </interactant>
    <interactant intactId="EBI-10269322">
        <id>Q8NCR6</id>
        <label>SPMIP6</label>
    </interactant>
    <organismsDiffer>false</organismsDiffer>
    <experiments>3</experiments>
</comment>
<comment type="interaction">
    <interactant intactId="EBI-740220">
        <id>O14964</id>
    </interactant>
    <interactant intactId="EBI-12035119">
        <id>O75177-5</id>
        <label>SS18L1</label>
    </interactant>
    <organismsDiffer>false</organismsDiffer>
    <experiments>3</experiments>
</comment>
<comment type="interaction">
    <interactant intactId="EBI-740220">
        <id>O14964</id>
    </interactant>
    <interactant intactId="EBI-752333">
        <id>Q92783</id>
        <label>STAM</label>
    </interactant>
    <organismsDiffer>false</organismsDiffer>
    <experiments>8</experiments>
</comment>
<comment type="interaction">
    <interactant intactId="EBI-740220">
        <id>O14964</id>
    </interactant>
    <interactant intactId="EBI-15763634">
        <id>Q92783-1</id>
        <label>STAM</label>
    </interactant>
    <organismsDiffer>false</organismsDiffer>
    <experiments>5</experiments>
</comment>
<comment type="interaction">
    <interactant intactId="EBI-740220">
        <id>O14964</id>
    </interactant>
    <interactant intactId="EBI-12025738">
        <id>Q92783-2</id>
        <label>STAM</label>
    </interactant>
    <organismsDiffer>false</organismsDiffer>
    <experiments>3</experiments>
</comment>
<comment type="interaction">
    <interactant intactId="EBI-740220">
        <id>O14964</id>
    </interactant>
    <interactant intactId="EBI-373258">
        <id>O75886</id>
        <label>STAM2</label>
    </interactant>
    <organismsDiffer>false</organismsDiffer>
    <experiments>3</experiments>
</comment>
<comment type="interaction">
    <interactant intactId="EBI-740220">
        <id>O14964</id>
    </interactant>
    <interactant intactId="EBI-1050045">
        <id>Q86UX6</id>
        <label>STK32C</label>
    </interactant>
    <organismsDiffer>false</organismsDiffer>
    <experiments>3</experiments>
</comment>
<comment type="interaction">
    <interactant intactId="EBI-740220">
        <id>O14964</id>
    </interactant>
    <interactant intactId="EBI-725557">
        <id>Q9NZ72</id>
        <label>STMN3</label>
    </interactant>
    <organismsDiffer>false</organismsDiffer>
    <experiments>3</experiments>
</comment>
<comment type="interaction">
    <interactant intactId="EBI-740220">
        <id>O14964</id>
    </interactant>
    <interactant intactId="EBI-714135">
        <id>O75558</id>
        <label>STX11</label>
    </interactant>
    <organismsDiffer>false</organismsDiffer>
    <experiments>3</experiments>
</comment>
<comment type="interaction">
    <interactant intactId="EBI-740220">
        <id>O14964</id>
    </interactant>
    <interactant intactId="EBI-80140">
        <id>P63165</id>
        <label>SUMO1</label>
    </interactant>
    <organismsDiffer>false</organismsDiffer>
    <experiments>3</experiments>
</comment>
<comment type="interaction">
    <interactant intactId="EBI-740220">
        <id>O14964</id>
    </interactant>
    <interactant intactId="EBI-742268">
        <id>O75478</id>
        <label>TADA2A</label>
    </interactant>
    <organismsDiffer>false</organismsDiffer>
    <experiments>4</experiments>
</comment>
<comment type="interaction">
    <interactant intactId="EBI-740220">
        <id>O14964</id>
    </interactant>
    <interactant intactId="EBI-16433586">
        <id>O75478-2</id>
        <label>TADA2A</label>
    </interactant>
    <organismsDiffer>false</organismsDiffer>
    <experiments>3</experiments>
</comment>
<comment type="interaction">
    <interactant intactId="EBI-740220">
        <id>O14964</id>
    </interactant>
    <interactant intactId="EBI-12096770">
        <id>O60806</id>
        <label>TBX19</label>
    </interactant>
    <organismsDiffer>false</organismsDiffer>
    <experiments>3</experiments>
</comment>
<comment type="interaction">
    <interactant intactId="EBI-740220">
        <id>O14964</id>
    </interactant>
    <interactant intactId="EBI-11897462">
        <id>Q8N4U5</id>
        <label>TCP11L2</label>
    </interactant>
    <organismsDiffer>false</organismsDiffer>
    <experiments>3</experiments>
</comment>
<comment type="interaction">
    <interactant intactId="EBI-740220">
        <id>O14964</id>
    </interactant>
    <interactant intactId="EBI-10180409">
        <id>Q969V4</id>
        <label>TEKT1</label>
    </interactant>
    <organismsDiffer>false</organismsDiffer>
    <experiments>6</experiments>
</comment>
<comment type="interaction">
    <interactant intactId="EBI-740220">
        <id>O14964</id>
    </interactant>
    <interactant intactId="EBI-10239812">
        <id>Q96M29</id>
        <label>TEKT5</label>
    </interactant>
    <organismsDiffer>false</organismsDiffer>
    <experiments>3</experiments>
</comment>
<comment type="interaction">
    <interactant intactId="EBI-740220">
        <id>O14964</id>
    </interactant>
    <interactant intactId="EBI-357061">
        <id>Q92734</id>
        <label>TFG</label>
    </interactant>
    <organismsDiffer>false</organismsDiffer>
    <experiments>3</experiments>
</comment>
<comment type="interaction">
    <interactant intactId="EBI-740220">
        <id>O14964</id>
    </interactant>
    <interactant intactId="EBI-1200382">
        <id>Q9Y5J6</id>
        <label>TIMM10B</label>
    </interactant>
    <organismsDiffer>false</organismsDiffer>
    <experiments>3</experiments>
</comment>
<comment type="interaction">
    <interactant intactId="EBI-740220">
        <id>O14964</id>
    </interactant>
    <interactant intactId="EBI-11741437">
        <id>Q08117-2</id>
        <label>TLE5</label>
    </interactant>
    <organismsDiffer>false</organismsDiffer>
    <experiments>8</experiments>
</comment>
<comment type="interaction">
    <interactant intactId="EBI-740220">
        <id>O14964</id>
    </interactant>
    <interactant intactId="EBI-396540">
        <id>Q12888</id>
        <label>TP53BP1</label>
    </interactant>
    <organismsDiffer>false</organismsDiffer>
    <experiments>3</experiments>
</comment>
<comment type="interaction">
    <interactant intactId="EBI-740220">
        <id>O14964</id>
    </interactant>
    <interactant intactId="EBI-359224">
        <id>Q13077</id>
        <label>TRAF1</label>
    </interactant>
    <organismsDiffer>false</organismsDiffer>
    <experiments>3</experiments>
</comment>
<comment type="interaction">
    <interactant intactId="EBI-740220">
        <id>O14964</id>
    </interactant>
    <interactant intactId="EBI-3650647">
        <id>Q9BUZ4</id>
        <label>TRAF4</label>
    </interactant>
    <organismsDiffer>false</organismsDiffer>
    <experiments>6</experiments>
</comment>
<comment type="interaction">
    <interactant intactId="EBI-740220">
        <id>O14964</id>
    </interactant>
    <interactant intactId="EBI-11981577">
        <id>Q9UDY6-2</id>
        <label>TRIM10</label>
    </interactant>
    <organismsDiffer>false</organismsDiffer>
    <experiments>3</experiments>
</comment>
<comment type="interaction">
    <interactant intactId="EBI-740220">
        <id>O14964</id>
    </interactant>
    <interactant intactId="EBI-743894">
        <id>Q9Y577</id>
        <label>TRIM17</label>
    </interactant>
    <organismsDiffer>false</organismsDiffer>
    <experiments>6</experiments>
</comment>
<comment type="interaction">
    <interactant intactId="EBI-740220">
        <id>O14964</id>
    </interactant>
    <interactant intactId="EBI-740098">
        <id>P36406</id>
        <label>TRIM23</label>
    </interactant>
    <organismsDiffer>false</organismsDiffer>
    <experiments>3</experiments>
</comment>
<comment type="interaction">
    <interactant intactId="EBI-740220">
        <id>O14964</id>
    </interactant>
    <interactant intactId="EBI-719493">
        <id>P14373</id>
        <label>TRIM27</label>
    </interactant>
    <organismsDiffer>false</organismsDiffer>
    <experiments>3</experiments>
</comment>
<comment type="interaction">
    <interactant intactId="EBI-740220">
        <id>O14964</id>
    </interactant>
    <interactant intactId="EBI-2130429">
        <id>Q9BYV2</id>
        <label>TRIM54</label>
    </interactant>
    <organismsDiffer>false</organismsDiffer>
    <experiments>3</experiments>
</comment>
<comment type="interaction">
    <interactant intactId="EBI-740220">
        <id>O14964</id>
    </interactant>
    <interactant intactId="EBI-11525489">
        <id>Q86WT6-2</id>
        <label>TRIM69</label>
    </interactant>
    <organismsDiffer>false</organismsDiffer>
    <experiments>6</experiments>
</comment>
<comment type="interaction">
    <interactant intactId="EBI-740220">
        <id>O14964</id>
    </interactant>
    <interactant intactId="EBI-10259086">
        <id>Q86UV6-2</id>
        <label>TRIM74</label>
    </interactant>
    <organismsDiffer>false</organismsDiffer>
    <experiments>5</experiments>
</comment>
<comment type="interaction">
    <interactant intactId="EBI-740220">
        <id>O14964</id>
    </interactant>
    <interactant intactId="EBI-11059915">
        <id>Q8N7C3</id>
        <label>TRIML2</label>
    </interactant>
    <organismsDiffer>false</organismsDiffer>
    <experiments>3</experiments>
</comment>
<comment type="interaction">
    <interactant intactId="EBI-740220">
        <id>O14964</id>
    </interactant>
    <interactant intactId="EBI-346882">
        <id>Q99816</id>
        <label>TSG101</label>
    </interactant>
    <organismsDiffer>false</organismsDiffer>
    <experiments>6</experiments>
</comment>
<comment type="interaction">
    <interactant intactId="EBI-740220">
        <id>O14964</id>
    </interactant>
    <interactant intactId="EBI-15891993">
        <id>Q99816-1</id>
        <label>TSG101</label>
    </interactant>
    <organismsDiffer>false</organismsDiffer>
    <experiments>2</experiments>
</comment>
<comment type="interaction">
    <interactant intactId="EBI-740220">
        <id>O14964</id>
    </interactant>
    <interactant intactId="EBI-2514383">
        <id>Q5T6F2</id>
        <label>UBAP2</label>
    </interactant>
    <organismsDiffer>false</organismsDiffer>
    <experiments>3</experiments>
</comment>
<comment type="interaction">
    <interactant intactId="EBI-740220">
        <id>O14964</id>
    </interactant>
    <interactant intactId="EBI-10180829">
        <id>Q7KZS0</id>
        <label>UBE2I</label>
    </interactant>
    <organismsDiffer>false</organismsDiffer>
    <experiments>5</experiments>
</comment>
<comment type="interaction">
    <interactant intactId="EBI-740220">
        <id>O14964</id>
    </interactant>
    <interactant intactId="EBI-947187">
        <id>Q9UHD9</id>
        <label>UBQLN2</label>
    </interactant>
    <organismsDiffer>false</organismsDiffer>
    <experiments>3</experiments>
</comment>
<comment type="interaction">
    <interactant intactId="EBI-740220">
        <id>O14964</id>
    </interactant>
    <interactant intactId="EBI-12295223">
        <id>Q8IYU4</id>
        <label>UBQLNL</label>
    </interactant>
    <organismsDiffer>false</organismsDiffer>
    <experiments>3</experiments>
</comment>
<comment type="interaction">
    <interactant intactId="EBI-740220">
        <id>O14964</id>
    </interactant>
    <interactant intactId="EBI-11524408">
        <id>Q5T124-6</id>
        <label>UBXN11</label>
    </interactant>
    <organismsDiffer>false</organismsDiffer>
    <experiments>3</experiments>
</comment>
<comment type="interaction">
    <interactant intactId="EBI-740220">
        <id>O14964</id>
    </interactant>
    <interactant intactId="EBI-739895">
        <id>Q8N6Y0</id>
        <label>USHBP1</label>
    </interactant>
    <organismsDiffer>false</organismsDiffer>
    <experiments>4</experiments>
</comment>
<comment type="interaction">
    <interactant intactId="EBI-740220">
        <id>O14964</id>
    </interactant>
    <interactant intactId="EBI-11975223">
        <id>Q70EL1-9</id>
        <label>USP54</label>
    </interactant>
    <organismsDiffer>false</organismsDiffer>
    <experiments>3</experiments>
</comment>
<comment type="interaction">
    <interactant intactId="EBI-740220">
        <id>O14964</id>
    </interactant>
    <interactant intactId="EBI-11957216">
        <id>A8MV65-2</id>
        <label>VGLL3</label>
    </interactant>
    <organismsDiffer>false</organismsDiffer>
    <experiments>3</experiments>
</comment>
<comment type="interaction">
    <interactant intactId="EBI-740220">
        <id>O14964</id>
    </interactant>
    <interactant intactId="EBI-4400866">
        <id>Q9H9H4</id>
        <label>VPS37B</label>
    </interactant>
    <organismsDiffer>false</organismsDiffer>
    <experiments>6</experiments>
</comment>
<comment type="interaction">
    <interactant intactId="EBI-740220">
        <id>O14964</id>
    </interactant>
    <interactant intactId="EBI-2559305">
        <id>A5D8V6</id>
        <label>VPS37C</label>
    </interactant>
    <organismsDiffer>false</organismsDiffer>
    <experiments>3</experiments>
</comment>
<comment type="interaction">
    <interactant intactId="EBI-740220">
        <id>O14964</id>
    </interactant>
    <interactant intactId="EBI-2799833">
        <id>Q8N1B4</id>
        <label>VPS52</label>
    </interactant>
    <organismsDiffer>false</organismsDiffer>
    <experiments>3</experiments>
</comment>
<comment type="interaction">
    <interactant intactId="EBI-740220">
        <id>O14964</id>
    </interactant>
    <interactant intactId="EBI-12298837">
        <id>Q2NKJ9</id>
        <label>ZNF430</label>
    </interactant>
    <organismsDiffer>false</organismsDiffer>
    <experiments>3</experiments>
</comment>
<comment type="interaction">
    <interactant intactId="EBI-740220">
        <id>O14964</id>
    </interactant>
    <interactant intactId="EBI-12945254">
        <id>M0R160</id>
        <label>ZNF44</label>
    </interactant>
    <organismsDiffer>false</organismsDiffer>
    <experiments>3</experiments>
</comment>
<comment type="interaction">
    <interactant intactId="EBI-740220">
        <id>O14964</id>
    </interactant>
    <interactant intactId="EBI-17234977">
        <id>A0A1U9X8X8</id>
    </interactant>
    <organismsDiffer>false</organismsDiffer>
    <experiments>3</experiments>
</comment>
<comment type="interaction">
    <interactant intactId="EBI-740220">
        <id>O14964</id>
    </interactant>
    <interactant intactId="EBI-25488942">
        <id>Q7TLC7</id>
        <label>ORF14</label>
    </interactant>
    <organismsDiffer>true</organismsDiffer>
    <experiments>2</experiments>
</comment>
<comment type="interaction">
    <interactant intactId="EBI-740220">
        <id>O14964</id>
    </interactant>
    <interactant intactId="EBI-7734031">
        <id>Q6NRD3</id>
        <label>sh3rf1</label>
    </interactant>
    <organismsDiffer>true</organismsDiffer>
    <experiments>3</experiments>
</comment>
<comment type="interaction">
    <interactant intactId="EBI-740220">
        <id>O14964</id>
    </interactant>
    <interactant intactId="EBI-9676218">
        <id>P03410</id>
        <label>tax</label>
    </interactant>
    <organismsDiffer>true</organismsDiffer>
    <experiments>4</experiments>
</comment>
<comment type="interaction">
    <interactant intactId="EBI-740220">
        <id>O14964</id>
    </interactant>
    <interactant intactId="EBI-9675698">
        <id>P14079</id>
        <label>tax</label>
    </interactant>
    <organismsDiffer>true</organismsDiffer>
    <experiments>4</experiments>
</comment>
<comment type="interaction">
    <interactant intactId="EBI-740220">
        <id>O14964</id>
    </interactant>
    <interactant intactId="EBI-5333021">
        <id>P0CG53</id>
        <label>UBB</label>
    </interactant>
    <organismsDiffer>true</organismsDiffer>
    <experiments>7</experiments>
</comment>
<comment type="interaction">
    <interactant intactId="EBI-740220">
        <id>O14964</id>
    </interactant>
    <interactant intactId="EBI-413053">
        <id>P62990</id>
        <label>UBC</label>
    </interactant>
    <organismsDiffer>true</organismsDiffer>
    <experiments>2</experiments>
</comment>
<comment type="interaction">
    <interactant intactId="EBI-21239519">
        <id>O14964-1</id>
    </interactant>
    <interactant intactId="EBI-1014500">
        <id>P35240-1</id>
        <label>NF2</label>
    </interactant>
    <organismsDiffer>false</organismsDiffer>
    <experiments>3</experiments>
</comment>
<comment type="interaction">
    <interactant intactId="EBI-21581128">
        <id>O14964-2</id>
    </interactant>
    <interactant intactId="EBI-1014509">
        <id>P35240-3</id>
        <label>NF2</label>
    </interactant>
    <organismsDiffer>false</organismsDiffer>
    <experiments>5</experiments>
</comment>
<comment type="subcellular location">
    <subcellularLocation>
        <location evidence="3">Cytoplasm</location>
    </subcellularLocation>
    <subcellularLocation>
        <location evidence="20 23">Early endosome membrane</location>
        <topology evidence="30 31">Peripheral membrane protein</topology>
        <orientation evidence="30 31">Cytoplasmic side</orientation>
    </subcellularLocation>
    <subcellularLocation>
        <location evidence="3">Endosome</location>
        <location evidence="3">Multivesicular body membrane</location>
        <topology evidence="3">Peripheral membrane protein</topology>
    </subcellularLocation>
    <text evidence="14">Colocalizes with UBQLN1 in ubiquitin-rich cytoplasmic aggregates that are not endocytic compartments.</text>
</comment>
<comment type="alternative products">
    <event type="alternative splicing"/>
    <isoform>
        <id>O14964-1</id>
        <name>1</name>
        <name>HRSi1</name>
        <sequence type="displayed"/>
    </isoform>
    <isoform>
        <id>O14964-2</id>
        <name>2</name>
        <name>HRSi2</name>
        <sequence type="described" ref="VSP_036172"/>
    </isoform>
</comment>
<comment type="tissue specificity">
    <text evidence="25 26">Ubiquitous expression in adult and fetal tissues with higher expression in testis and peripheral blood leukocytes.</text>
</comment>
<comment type="domain">
    <text>Has a double-sided UIM that can bind 2 ubiquitin molecules, one on each side of the helix.</text>
</comment>
<comment type="domain">
    <text>The FYVE-type zinc finger domain mediates interactions with phosphatidylinositol 3-phosphate in membranes of early endosomes and penetrates bilayers. The FYVE domain insertion into PtdIns(3)P-enriched membranes is substantially increased in acidic conditions.</text>
</comment>
<comment type="PTM">
    <text evidence="2">Phosphorylated on Tyr-334. A minor site of phosphorylation on Tyr-329 is detected (By similarity). Phosphorylation occurs in response to EGF, IL-2, GM-CSF and HGF.</text>
</comment>
<comment type="PTM">
    <text evidence="11 23 24">Ubiquitinated (PubMed:25588945). Ubiquitinated by ITCH (PubMed:14602072, PubMed:24790097).</text>
</comment>
<comment type="miscellaneous">
    <molecule>Isoform 2</molecule>
    <text evidence="29">Dubious isoform produced through aberrant splice sites.</text>
</comment>
<proteinExistence type="evidence at protein level"/>
<sequence>MGRGSGTFERLLDKATSQLLLETDWESILQICDLIRQGDTQAKYAVNSIKKKVNDKNPHVALYALEVMESVVKNCGQTVHDEVANKQTMEELKDLLKRQVEVNVRNKILYLIQAWAHAFRNEPKYKVVQDTYQIMKVEGHVFPEFKESDAMFAAERAPDWVDAEECHRCRVQFGVMTRKHHCRACGQIFCGKCSSKYSTIPKFGIEKEVRVCEPCYEQLNRKAEGKATSTTELPPEYLTSPLSQQSQLPPKRDETALQEEEELQLALALSQSEAEEKERLRQKSTYTSYPKAEPMPSASSAPPASSLYSSPVNSSAPLAEDIDPELARYLNRNYWEKKQEEARKSPTPSAPVPLTEPAAQPGEGHAAPTNVVENPLPETDSQPIPPSGGPFSEPQFHNGESEESHEQFLKALQNAVTTFVNRMKSNHMRGRSITNDSAVLSLFQSINGMHPQLLELLNQLDERRLYYEGLQDKLAQIRDARGALSALREEHREKLRRAAEEAERQRQIQLAQKLEIMRQKKQEYLEVQRQLAIQRLQEQEKERQMRLEQQKQTVQMRAQMPAFPLPYAQLQAMPAAGGVLYQPSGPASFPSTFSPAGSVEGSPMHGVYMSQPAPAAGPYPSMPSTAADPSMVSAYMYPAGATGAQAAPQAQAGPTASPAYSSYQPTPTAGYQNVASQAPQSLPAISQPPQSSTMGYMGSQSVSMGYQPYNMQNLMTTLPSQDASLPPQQPYIAGQQPMYQQMAPSGGPPQQQPPVAQQPQAQGPPAQGSEAQLISFD</sequence>
<gene>
    <name type="primary">HGS</name>
    <name type="synonym">HRS</name>
</gene>
<accession>O14964</accession>
<accession>Q9NR36</accession>
<feature type="chain" id="PRO_0000098708" description="Hepatocyte growth factor-regulated tyrosine kinase substrate">
    <location>
        <begin position="1"/>
        <end position="777"/>
    </location>
</feature>
<feature type="domain" description="VHS" evidence="6">
    <location>
        <begin position="15"/>
        <end position="143"/>
    </location>
</feature>
<feature type="domain" description="UIM" evidence="5">
    <location>
        <begin position="258"/>
        <end position="277"/>
    </location>
</feature>
<feature type="zinc finger region" description="FYVE-type" evidence="4">
    <location>
        <begin position="160"/>
        <end position="220"/>
    </location>
</feature>
<feature type="region of interest" description="Disordered" evidence="7">
    <location>
        <begin position="223"/>
        <end position="319"/>
    </location>
</feature>
<feature type="region of interest" description="Interaction with SNX1" evidence="1">
    <location>
        <begin position="225"/>
        <end position="543"/>
    </location>
</feature>
<feature type="region of interest" description="Disordered" evidence="7">
    <location>
        <begin position="338"/>
        <end position="407"/>
    </location>
</feature>
<feature type="region of interest" description="Interaction with SNAP25 and TRAK2" evidence="1">
    <location>
        <begin position="445"/>
        <end position="543"/>
    </location>
</feature>
<feature type="region of interest" description="Interaction with STAM" evidence="2">
    <location>
        <begin position="454"/>
        <end position="572"/>
    </location>
</feature>
<feature type="region of interest" description="Interaction with NF2" evidence="8">
    <location>
        <begin position="480"/>
        <end position="777"/>
    </location>
</feature>
<feature type="region of interest" description="Disordered" evidence="7">
    <location>
        <begin position="718"/>
        <end position="777"/>
    </location>
</feature>
<feature type="compositionally biased region" description="Low complexity" evidence="7">
    <location>
        <begin position="290"/>
        <end position="311"/>
    </location>
</feature>
<feature type="compositionally biased region" description="Low complexity" evidence="7">
    <location>
        <begin position="753"/>
        <end position="768"/>
    </location>
</feature>
<feature type="binding site" evidence="4">
    <location>
        <position position="166"/>
    </location>
    <ligand>
        <name>Zn(2+)</name>
        <dbReference type="ChEBI" id="CHEBI:29105"/>
        <label>1</label>
    </ligand>
</feature>
<feature type="binding site" evidence="4">
    <location>
        <position position="169"/>
    </location>
    <ligand>
        <name>Zn(2+)</name>
        <dbReference type="ChEBI" id="CHEBI:29105"/>
        <label>1</label>
    </ligand>
</feature>
<feature type="binding site" evidence="4">
    <location>
        <position position="182"/>
    </location>
    <ligand>
        <name>Zn(2+)</name>
        <dbReference type="ChEBI" id="CHEBI:29105"/>
        <label>2</label>
    </ligand>
</feature>
<feature type="binding site" evidence="4">
    <location>
        <position position="185"/>
    </location>
    <ligand>
        <name>Zn(2+)</name>
        <dbReference type="ChEBI" id="CHEBI:29105"/>
        <label>2</label>
    </ligand>
</feature>
<feature type="binding site" evidence="4">
    <location>
        <position position="190"/>
    </location>
    <ligand>
        <name>Zn(2+)</name>
        <dbReference type="ChEBI" id="CHEBI:29105"/>
        <label>1</label>
    </ligand>
</feature>
<feature type="binding site" evidence="4">
    <location>
        <position position="193"/>
    </location>
    <ligand>
        <name>Zn(2+)</name>
        <dbReference type="ChEBI" id="CHEBI:29105"/>
        <label>1</label>
    </ligand>
</feature>
<feature type="binding site" evidence="4">
    <location>
        <position position="212"/>
    </location>
    <ligand>
        <name>Zn(2+)</name>
        <dbReference type="ChEBI" id="CHEBI:29105"/>
        <label>2</label>
    </ligand>
</feature>
<feature type="binding site" evidence="4">
    <location>
        <position position="215"/>
    </location>
    <ligand>
        <name>Zn(2+)</name>
        <dbReference type="ChEBI" id="CHEBI:29105"/>
        <label>2</label>
    </ligand>
</feature>
<feature type="modified residue" description="N6-acetyllysine" evidence="33">
    <location>
        <position position="207"/>
    </location>
</feature>
<feature type="modified residue" description="Phosphotyrosine" evidence="32">
    <location>
        <position position="216"/>
    </location>
</feature>
<feature type="modified residue" description="Phosphotyrosine" evidence="2">
    <location>
        <position position="308"/>
    </location>
</feature>
<feature type="modified residue" description="Phosphotyrosine" evidence="2">
    <location>
        <position position="329"/>
    </location>
</feature>
<feature type="modified residue" description="Phosphotyrosine" evidence="2">
    <location>
        <position position="334"/>
    </location>
</feature>
<feature type="modified residue" description="N6-succinyllysine" evidence="2">
    <location>
        <position position="551"/>
    </location>
</feature>
<feature type="splice variant" id="VSP_036172" description="In isoform 2." evidence="27">
    <location>
        <begin position="518"/>
        <end position="604"/>
    </location>
</feature>
<feature type="sequence variant" id="VAR_054154" description="In dbSNP:rs753682847." evidence="17">
    <original>T</original>
    <variation>S</variation>
    <location>
        <position position="7"/>
    </location>
</feature>
<feature type="sequence variant" id="VAR_052981" description="In dbSNP:rs34868130.">
    <original>E</original>
    <variation>D</variation>
    <location>
        <position position="400"/>
    </location>
</feature>
<feature type="sequence variant" id="VAR_061991" description="In dbSNP:rs56058441.">
    <original>A</original>
    <variation>S</variation>
    <location>
        <position position="733"/>
    </location>
</feature>
<feature type="mutagenesis site" description="Strongly reduced ubiquitin-binding. Reduced degradation of ubiquitinated EGFR." evidence="15">
    <original>A</original>
    <variation>Q</variation>
    <location>
        <position position="266"/>
    </location>
</feature>
<feature type="mutagenesis site" description="Strongly reduced ubiquitin-binding. Reduced degradation of ubiquitinated EGFR." evidence="15">
    <original>A</original>
    <variation>Q</variation>
    <location>
        <position position="268"/>
    </location>
</feature>
<feature type="sequence conflict" description="In Ref. 3; AAF82361." evidence="29" ref="3">
    <original>E</original>
    <variation>D</variation>
    <location>
        <position position="236"/>
    </location>
</feature>
<feature type="helix" evidence="36">
    <location>
        <begin position="7"/>
        <end position="15"/>
    </location>
</feature>
<feature type="helix" evidence="36">
    <location>
        <begin position="25"/>
        <end position="36"/>
    </location>
</feature>
<feature type="helix" evidence="36">
    <location>
        <begin position="42"/>
        <end position="53"/>
    </location>
</feature>
<feature type="helix" evidence="36">
    <location>
        <begin position="58"/>
        <end position="75"/>
    </location>
</feature>
<feature type="helix" evidence="36">
    <location>
        <begin position="77"/>
        <end position="83"/>
    </location>
</feature>
<feature type="helix" evidence="36">
    <location>
        <begin position="86"/>
        <end position="98"/>
    </location>
</feature>
<feature type="helix" evidence="36">
    <location>
        <begin position="102"/>
        <end position="118"/>
    </location>
</feature>
<feature type="turn" evidence="36">
    <location>
        <begin position="119"/>
        <end position="121"/>
    </location>
</feature>
<feature type="helix" evidence="36">
    <location>
        <begin position="123"/>
        <end position="125"/>
    </location>
</feature>
<feature type="helix" evidence="36">
    <location>
        <begin position="126"/>
        <end position="138"/>
    </location>
</feature>
<feature type="helix" evidence="36">
    <location>
        <begin position="147"/>
        <end position="150"/>
    </location>
</feature>
<feature type="turn" evidence="36">
    <location>
        <begin position="167"/>
        <end position="169"/>
    </location>
</feature>
<feature type="turn" evidence="36">
    <location>
        <begin position="183"/>
        <end position="185"/>
    </location>
</feature>
<feature type="turn" evidence="36">
    <location>
        <begin position="191"/>
        <end position="193"/>
    </location>
</feature>
<feature type="strand" evidence="36">
    <location>
        <begin position="196"/>
        <end position="200"/>
    </location>
</feature>
<feature type="helix" evidence="36">
    <location>
        <begin position="201"/>
        <end position="203"/>
    </location>
</feature>
<feature type="strand" evidence="36">
    <location>
        <begin position="205"/>
        <end position="211"/>
    </location>
</feature>
<feature type="helix" evidence="36">
    <location>
        <begin position="213"/>
        <end position="219"/>
    </location>
</feature>
<feature type="helix" evidence="34">
    <location>
        <begin position="258"/>
        <end position="273"/>
    </location>
</feature>
<feature type="helix" evidence="35">
    <location>
        <begin position="405"/>
        <end position="428"/>
    </location>
</feature>
<feature type="helix" evidence="35">
    <location>
        <begin position="433"/>
        <end position="435"/>
    </location>
</feature>
<feature type="helix" evidence="35">
    <location>
        <begin position="437"/>
        <end position="499"/>
    </location>
</feature>
<organism>
    <name type="scientific">Homo sapiens</name>
    <name type="common">Human</name>
    <dbReference type="NCBI Taxonomy" id="9606"/>
    <lineage>
        <taxon>Eukaryota</taxon>
        <taxon>Metazoa</taxon>
        <taxon>Chordata</taxon>
        <taxon>Craniata</taxon>
        <taxon>Vertebrata</taxon>
        <taxon>Euteleostomi</taxon>
        <taxon>Mammalia</taxon>
        <taxon>Eutheria</taxon>
        <taxon>Euarchontoglires</taxon>
        <taxon>Primates</taxon>
        <taxon>Haplorrhini</taxon>
        <taxon>Catarrhini</taxon>
        <taxon>Hominidae</taxon>
        <taxon>Homo</taxon>
    </lineage>
</organism>
<protein>
    <recommendedName>
        <fullName>Hepatocyte growth factor-regulated tyrosine kinase substrate</fullName>
    </recommendedName>
    <alternativeName>
        <fullName evidence="28">Hrs</fullName>
    </alternativeName>
    <alternativeName>
        <fullName>Protein pp110</fullName>
    </alternativeName>
</protein>
<evidence type="ECO:0000250" key="1"/>
<evidence type="ECO:0000250" key="2">
    <source>
        <dbReference type="UniProtKB" id="Q99LI8"/>
    </source>
</evidence>
<evidence type="ECO:0000250" key="3">
    <source>
        <dbReference type="UniProtKB" id="Q9JJ50"/>
    </source>
</evidence>
<evidence type="ECO:0000255" key="4">
    <source>
        <dbReference type="PROSITE-ProRule" id="PRU00091"/>
    </source>
</evidence>
<evidence type="ECO:0000255" key="5">
    <source>
        <dbReference type="PROSITE-ProRule" id="PRU00213"/>
    </source>
</evidence>
<evidence type="ECO:0000255" key="6">
    <source>
        <dbReference type="PROSITE-ProRule" id="PRU00218"/>
    </source>
</evidence>
<evidence type="ECO:0000256" key="7">
    <source>
        <dbReference type="SAM" id="MobiDB-lite"/>
    </source>
</evidence>
<evidence type="ECO:0000269" key="8">
    <source>
    </source>
</evidence>
<evidence type="ECO:0000269" key="9">
    <source>
    </source>
</evidence>
<evidence type="ECO:0000269" key="10">
    <source>
    </source>
</evidence>
<evidence type="ECO:0000269" key="11">
    <source>
    </source>
</evidence>
<evidence type="ECO:0000269" key="12">
    <source>
    </source>
</evidence>
<evidence type="ECO:0000269" key="13">
    <source>
    </source>
</evidence>
<evidence type="ECO:0000269" key="14">
    <source>
    </source>
</evidence>
<evidence type="ECO:0000269" key="15">
    <source>
    </source>
</evidence>
<evidence type="ECO:0000269" key="16">
    <source>
    </source>
</evidence>
<evidence type="ECO:0000269" key="17">
    <source>
    </source>
</evidence>
<evidence type="ECO:0000269" key="18">
    <source>
    </source>
</evidence>
<evidence type="ECO:0000269" key="19">
    <source>
    </source>
</evidence>
<evidence type="ECO:0000269" key="20">
    <source>
    </source>
</evidence>
<evidence type="ECO:0000269" key="21">
    <source>
    </source>
</evidence>
<evidence type="ECO:0000269" key="22">
    <source>
    </source>
</evidence>
<evidence type="ECO:0000269" key="23">
    <source>
    </source>
</evidence>
<evidence type="ECO:0000269" key="24">
    <source>
    </source>
</evidence>
<evidence type="ECO:0000269" key="25">
    <source>
    </source>
</evidence>
<evidence type="ECO:0000269" key="26">
    <source>
    </source>
</evidence>
<evidence type="ECO:0000303" key="27">
    <source>
    </source>
</evidence>
<evidence type="ECO:0000303" key="28">
    <source>
    </source>
</evidence>
<evidence type="ECO:0000305" key="29"/>
<evidence type="ECO:0000305" key="30">
    <source>
    </source>
</evidence>
<evidence type="ECO:0000305" key="31">
    <source>
    </source>
</evidence>
<evidence type="ECO:0007744" key="32">
    <source>
    </source>
</evidence>
<evidence type="ECO:0007744" key="33">
    <source>
    </source>
</evidence>
<evidence type="ECO:0007829" key="34">
    <source>
        <dbReference type="PDB" id="2D3G"/>
    </source>
</evidence>
<evidence type="ECO:0007829" key="35">
    <source>
        <dbReference type="PDB" id="3F1I"/>
    </source>
</evidence>
<evidence type="ECO:0007829" key="36">
    <source>
        <dbReference type="PDB" id="3ZYQ"/>
    </source>
</evidence>
<dbReference type="EMBL" id="U43895">
    <property type="protein sequence ID" value="AAC51929.1"/>
    <property type="molecule type" value="mRNA"/>
</dbReference>
<dbReference type="EMBL" id="D84064">
    <property type="protein sequence ID" value="BAA23366.1"/>
    <property type="molecule type" value="mRNA"/>
</dbReference>
<dbReference type="EMBL" id="AF260566">
    <property type="protein sequence ID" value="AAF82361.1"/>
    <property type="molecule type" value="mRNA"/>
</dbReference>
<dbReference type="EMBL" id="BT009754">
    <property type="protein sequence ID" value="AAP88756.1"/>
    <property type="molecule type" value="mRNA"/>
</dbReference>
<dbReference type="EMBL" id="BC003565">
    <property type="protein sequence ID" value="AAH03565.1"/>
    <property type="molecule type" value="mRNA"/>
</dbReference>
<dbReference type="CCDS" id="CCDS11784.1">
    <molecule id="O14964-1"/>
</dbReference>
<dbReference type="RefSeq" id="NP_004703.1">
    <molecule id="O14964-1"/>
    <property type="nucleotide sequence ID" value="NM_004712.5"/>
</dbReference>
<dbReference type="PDB" id="2D3G">
    <property type="method" value="X-ray"/>
    <property type="resolution" value="1.70 A"/>
    <property type="chains" value="P=257-277"/>
</dbReference>
<dbReference type="PDB" id="3F1I">
    <property type="method" value="X-ray"/>
    <property type="resolution" value="2.30 A"/>
    <property type="chains" value="H=404-501"/>
</dbReference>
<dbReference type="PDB" id="3OBQ">
    <property type="method" value="X-ray"/>
    <property type="resolution" value="1.40 A"/>
    <property type="chains" value="B=346-354"/>
</dbReference>
<dbReference type="PDB" id="3ZYQ">
    <property type="method" value="X-ray"/>
    <property type="resolution" value="1.48 A"/>
    <property type="chains" value="A=1-225"/>
</dbReference>
<dbReference type="PDB" id="4AVX">
    <property type="method" value="X-ray"/>
    <property type="resolution" value="1.68 A"/>
    <property type="chains" value="A=1-225"/>
</dbReference>
<dbReference type="PDBsum" id="2D3G"/>
<dbReference type="PDBsum" id="3F1I"/>
<dbReference type="PDBsum" id="3OBQ"/>
<dbReference type="PDBsum" id="3ZYQ"/>
<dbReference type="PDBsum" id="4AVX"/>
<dbReference type="SMR" id="O14964"/>
<dbReference type="BioGRID" id="114593">
    <property type="interactions" value="542"/>
</dbReference>
<dbReference type="ComplexPortal" id="CPX-2825">
    <property type="entry name" value="ESCRT-0 complex, STAM variant"/>
</dbReference>
<dbReference type="ComplexPortal" id="CPX-7143">
    <property type="entry name" value="ESCRT-0 complex, STAM2 variant"/>
</dbReference>
<dbReference type="CORUM" id="O14964"/>
<dbReference type="DIP" id="DIP-29050N"/>
<dbReference type="ELM" id="O14964"/>
<dbReference type="FunCoup" id="O14964">
    <property type="interactions" value="2254"/>
</dbReference>
<dbReference type="IntAct" id="O14964">
    <property type="interactions" value="342"/>
</dbReference>
<dbReference type="MINT" id="O14964"/>
<dbReference type="STRING" id="9606.ENSP00000331201"/>
<dbReference type="DrugBank" id="DB04272">
    <property type="generic name" value="Citric acid"/>
</dbReference>
<dbReference type="GlyCosmos" id="O14964">
    <property type="glycosylation" value="4 sites, 1 glycan"/>
</dbReference>
<dbReference type="GlyGen" id="O14964">
    <property type="glycosylation" value="12 sites, 1 O-linked glycan (8 sites)"/>
</dbReference>
<dbReference type="iPTMnet" id="O14964"/>
<dbReference type="MetOSite" id="O14964"/>
<dbReference type="PhosphoSitePlus" id="O14964"/>
<dbReference type="BioMuta" id="HGS"/>
<dbReference type="jPOST" id="O14964"/>
<dbReference type="MassIVE" id="O14964"/>
<dbReference type="PaxDb" id="9606-ENSP00000331201"/>
<dbReference type="PeptideAtlas" id="O14964"/>
<dbReference type="ProteomicsDB" id="48337">
    <molecule id="O14964-1"/>
</dbReference>
<dbReference type="ProteomicsDB" id="48338">
    <molecule id="O14964-2"/>
</dbReference>
<dbReference type="Pumba" id="O14964"/>
<dbReference type="Antibodypedia" id="1403">
    <property type="antibodies" value="564 antibodies from 39 providers"/>
</dbReference>
<dbReference type="DNASU" id="9146"/>
<dbReference type="Ensembl" id="ENST00000329138.9">
    <molecule id="O14964-1"/>
    <property type="protein sequence ID" value="ENSP00000331201.4"/>
    <property type="gene ID" value="ENSG00000185359.14"/>
</dbReference>
<dbReference type="Ensembl" id="ENST00000676546.1">
    <molecule id="O14964-1"/>
    <property type="protein sequence ID" value="ENSP00000504106.1"/>
    <property type="gene ID" value="ENSG00000185359.14"/>
</dbReference>
<dbReference type="GeneID" id="9146"/>
<dbReference type="KEGG" id="hsa:9146"/>
<dbReference type="MANE-Select" id="ENST00000329138.9">
    <property type="protein sequence ID" value="ENSP00000331201.4"/>
    <property type="RefSeq nucleotide sequence ID" value="NM_004712.5"/>
    <property type="RefSeq protein sequence ID" value="NP_004703.1"/>
</dbReference>
<dbReference type="UCSC" id="uc002kbg.4">
    <molecule id="O14964-1"/>
    <property type="organism name" value="human"/>
</dbReference>
<dbReference type="AGR" id="HGNC:4897"/>
<dbReference type="CTD" id="9146"/>
<dbReference type="DisGeNET" id="9146"/>
<dbReference type="GeneCards" id="HGS"/>
<dbReference type="HGNC" id="HGNC:4897">
    <property type="gene designation" value="HGS"/>
</dbReference>
<dbReference type="HPA" id="ENSG00000185359">
    <property type="expression patterns" value="Low tissue specificity"/>
</dbReference>
<dbReference type="MIM" id="604375">
    <property type="type" value="gene"/>
</dbReference>
<dbReference type="neXtProt" id="NX_O14964"/>
<dbReference type="OpenTargets" id="ENSG00000185359"/>
<dbReference type="PharmGKB" id="PA29271"/>
<dbReference type="VEuPathDB" id="HostDB:ENSG00000185359"/>
<dbReference type="eggNOG" id="KOG1818">
    <property type="taxonomic scope" value="Eukaryota"/>
</dbReference>
<dbReference type="GeneTree" id="ENSGT00940000158297"/>
<dbReference type="HOGENOM" id="CLU_013062_1_0_1"/>
<dbReference type="InParanoid" id="O14964"/>
<dbReference type="OMA" id="CGHKIHA"/>
<dbReference type="OrthoDB" id="957735at2759"/>
<dbReference type="PAN-GO" id="O14964">
    <property type="GO annotations" value="4 GO annotations based on evolutionary models"/>
</dbReference>
<dbReference type="PhylomeDB" id="O14964"/>
<dbReference type="TreeFam" id="TF314470"/>
<dbReference type="PathwayCommons" id="O14964"/>
<dbReference type="Reactome" id="R-HSA-182971">
    <property type="pathway name" value="EGFR downregulation"/>
</dbReference>
<dbReference type="Reactome" id="R-HSA-432720">
    <property type="pathway name" value="Lysosome Vesicle Biogenesis"/>
</dbReference>
<dbReference type="Reactome" id="R-HSA-5689880">
    <property type="pathway name" value="Ub-specific processing proteases"/>
</dbReference>
<dbReference type="Reactome" id="R-HSA-6807004">
    <property type="pathway name" value="Negative regulation of MET activity"/>
</dbReference>
<dbReference type="Reactome" id="R-HSA-8856825">
    <property type="pathway name" value="Cargo recognition for clathrin-mediated endocytosis"/>
</dbReference>
<dbReference type="Reactome" id="R-HSA-8856828">
    <property type="pathway name" value="Clathrin-mediated endocytosis"/>
</dbReference>
<dbReference type="Reactome" id="R-HSA-8875360">
    <property type="pathway name" value="InlB-mediated entry of Listeria monocytogenes into host cell"/>
</dbReference>
<dbReference type="Reactome" id="R-HSA-9013420">
    <property type="pathway name" value="RHOU GTPase cycle"/>
</dbReference>
<dbReference type="Reactome" id="R-HSA-917729">
    <property type="pathway name" value="Endosomal Sorting Complex Required For Transport (ESCRT)"/>
</dbReference>
<dbReference type="Reactome" id="R-HSA-9635644">
    <property type="pathway name" value="Inhibition of membrane repair"/>
</dbReference>
<dbReference type="Reactome" id="R-HSA-9636383">
    <property type="pathway name" value="Prevention of phagosomal-lysosomal fusion"/>
</dbReference>
<dbReference type="Reactome" id="R-HSA-9706019">
    <property type="pathway name" value="RHOBTB3 ATPase cycle"/>
</dbReference>
<dbReference type="SignaLink" id="O14964"/>
<dbReference type="SIGNOR" id="O14964"/>
<dbReference type="BioGRID-ORCS" id="9146">
    <property type="hits" value="532 hits in 1169 CRISPR screens"/>
</dbReference>
<dbReference type="CD-CODE" id="FB4E32DD">
    <property type="entry name" value="Presynaptic clusters and postsynaptic densities"/>
</dbReference>
<dbReference type="ChiTaRS" id="HGS">
    <property type="organism name" value="human"/>
</dbReference>
<dbReference type="EvolutionaryTrace" id="O14964"/>
<dbReference type="GeneWiki" id="HGS_(gene)"/>
<dbReference type="GenomeRNAi" id="9146"/>
<dbReference type="Pharos" id="O14964">
    <property type="development level" value="Tbio"/>
</dbReference>
<dbReference type="PRO" id="PR:O14964"/>
<dbReference type="Proteomes" id="UP000005640">
    <property type="component" value="Chromosome 17"/>
</dbReference>
<dbReference type="RNAct" id="O14964">
    <property type="molecule type" value="protein"/>
</dbReference>
<dbReference type="Bgee" id="ENSG00000185359">
    <property type="expression patterns" value="Expressed in right uterine tube and 204 other cell types or tissues"/>
</dbReference>
<dbReference type="ExpressionAtlas" id="O14964">
    <property type="expression patterns" value="baseline and differential"/>
</dbReference>
<dbReference type="GO" id="GO:0005829">
    <property type="term" value="C:cytosol"/>
    <property type="evidence" value="ECO:0000314"/>
    <property type="project" value="HPA"/>
</dbReference>
<dbReference type="GO" id="GO:0005769">
    <property type="term" value="C:early endosome"/>
    <property type="evidence" value="ECO:0000314"/>
    <property type="project" value="HGNC-UCL"/>
</dbReference>
<dbReference type="GO" id="GO:0031901">
    <property type="term" value="C:early endosome membrane"/>
    <property type="evidence" value="ECO:0007669"/>
    <property type="project" value="UniProtKB-SubCell"/>
</dbReference>
<dbReference type="GO" id="GO:0005768">
    <property type="term" value="C:endosome"/>
    <property type="evidence" value="ECO:0000314"/>
    <property type="project" value="HGNC-UCL"/>
</dbReference>
<dbReference type="GO" id="GO:0033565">
    <property type="term" value="C:ESCRT-0 complex"/>
    <property type="evidence" value="ECO:0000314"/>
    <property type="project" value="UniProtKB"/>
</dbReference>
<dbReference type="GO" id="GO:0070062">
    <property type="term" value="C:extracellular exosome"/>
    <property type="evidence" value="ECO:0007005"/>
    <property type="project" value="UniProtKB"/>
</dbReference>
<dbReference type="GO" id="GO:0005764">
    <property type="term" value="C:lysosome"/>
    <property type="evidence" value="ECO:0000314"/>
    <property type="project" value="HPA"/>
</dbReference>
<dbReference type="GO" id="GO:0032585">
    <property type="term" value="C:multivesicular body membrane"/>
    <property type="evidence" value="ECO:0007669"/>
    <property type="project" value="UniProtKB-SubCell"/>
</dbReference>
<dbReference type="GO" id="GO:0097013">
    <property type="term" value="C:phagocytic vesicle lumen"/>
    <property type="evidence" value="ECO:0000304"/>
    <property type="project" value="Reactome"/>
</dbReference>
<dbReference type="GO" id="GO:0035091">
    <property type="term" value="F:phosphatidylinositol binding"/>
    <property type="evidence" value="ECO:0007669"/>
    <property type="project" value="InterPro"/>
</dbReference>
<dbReference type="GO" id="GO:0019904">
    <property type="term" value="F:protein domain specific binding"/>
    <property type="evidence" value="ECO:0000353"/>
    <property type="project" value="UniProtKB"/>
</dbReference>
<dbReference type="GO" id="GO:0043130">
    <property type="term" value="F:ubiquitin binding"/>
    <property type="evidence" value="ECO:0000318"/>
    <property type="project" value="GO_Central"/>
</dbReference>
<dbReference type="GO" id="GO:0044389">
    <property type="term" value="F:ubiquitin-like protein ligase binding"/>
    <property type="evidence" value="ECO:0000353"/>
    <property type="project" value="UniProtKB"/>
</dbReference>
<dbReference type="GO" id="GO:0008270">
    <property type="term" value="F:zinc ion binding"/>
    <property type="evidence" value="ECO:0007669"/>
    <property type="project" value="UniProtKB-KW"/>
</dbReference>
<dbReference type="GO" id="GO:0032456">
    <property type="term" value="P:endocytic recycling"/>
    <property type="evidence" value="ECO:0000318"/>
    <property type="project" value="GO_Central"/>
</dbReference>
<dbReference type="GO" id="GO:0016197">
    <property type="term" value="P:endosomal transport"/>
    <property type="evidence" value="ECO:0000303"/>
    <property type="project" value="UniProtKB"/>
</dbReference>
<dbReference type="GO" id="GO:0016236">
    <property type="term" value="P:macroautophagy"/>
    <property type="evidence" value="ECO:0000304"/>
    <property type="project" value="ParkinsonsUK-UCL"/>
</dbReference>
<dbReference type="GO" id="GO:0090148">
    <property type="term" value="P:membrane fission"/>
    <property type="evidence" value="ECO:0000303"/>
    <property type="project" value="ComplexPortal"/>
</dbReference>
<dbReference type="GO" id="GO:0010324">
    <property type="term" value="P:membrane invagination"/>
    <property type="evidence" value="ECO:0000315"/>
    <property type="project" value="UniProtKB"/>
</dbReference>
<dbReference type="GO" id="GO:0036258">
    <property type="term" value="P:multivesicular body assembly"/>
    <property type="evidence" value="ECO:0000304"/>
    <property type="project" value="ParkinsonsUK-UCL"/>
</dbReference>
<dbReference type="GO" id="GO:0016525">
    <property type="term" value="P:negative regulation of angiogenesis"/>
    <property type="evidence" value="ECO:0000315"/>
    <property type="project" value="BHF-UCL"/>
</dbReference>
<dbReference type="GO" id="GO:0008285">
    <property type="term" value="P:negative regulation of cell population proliferation"/>
    <property type="evidence" value="ECO:0000304"/>
    <property type="project" value="ProtInc"/>
</dbReference>
<dbReference type="GO" id="GO:0010642">
    <property type="term" value="P:negative regulation of platelet-derived growth factor receptor signaling pathway"/>
    <property type="evidence" value="ECO:0000315"/>
    <property type="project" value="BHF-UCL"/>
</dbReference>
<dbReference type="GO" id="GO:0046426">
    <property type="term" value="P:negative regulation of receptor signaling pathway via JAK-STAT"/>
    <property type="evidence" value="ECO:0000314"/>
    <property type="project" value="HGNC-UCL"/>
</dbReference>
<dbReference type="GO" id="GO:0030948">
    <property type="term" value="P:negative regulation of vascular endothelial growth factor receptor signaling pathway"/>
    <property type="evidence" value="ECO:0000315"/>
    <property type="project" value="BHF-UCL"/>
</dbReference>
<dbReference type="GO" id="GO:1903543">
    <property type="term" value="P:positive regulation of exosomal secretion"/>
    <property type="evidence" value="ECO:0000315"/>
    <property type="project" value="UniProtKB"/>
</dbReference>
<dbReference type="GO" id="GO:0010628">
    <property type="term" value="P:positive regulation of gene expression"/>
    <property type="evidence" value="ECO:0000315"/>
    <property type="project" value="UniProtKB"/>
</dbReference>
<dbReference type="GO" id="GO:0072657">
    <property type="term" value="P:protein localization to membrane"/>
    <property type="evidence" value="ECO:0000315"/>
    <property type="project" value="UniProtKB"/>
</dbReference>
<dbReference type="GO" id="GO:0006622">
    <property type="term" value="P:protein targeting to lysosome"/>
    <property type="evidence" value="ECO:0000315"/>
    <property type="project" value="UniProtKB"/>
</dbReference>
<dbReference type="GO" id="GO:0043328">
    <property type="term" value="P:protein transport to vacuole involved in ubiquitin-dependent protein catabolic process via the multivesicular body sorting pathway"/>
    <property type="evidence" value="ECO:0000303"/>
    <property type="project" value="ComplexPortal"/>
</dbReference>
<dbReference type="GO" id="GO:0031623">
    <property type="term" value="P:receptor internalization"/>
    <property type="evidence" value="ECO:0000318"/>
    <property type="project" value="GO_Central"/>
</dbReference>
<dbReference type="GO" id="GO:0043405">
    <property type="term" value="P:regulation of MAP kinase activity"/>
    <property type="evidence" value="ECO:0000315"/>
    <property type="project" value="UniProtKB"/>
</dbReference>
<dbReference type="GO" id="GO:0042176">
    <property type="term" value="P:regulation of protein catabolic process"/>
    <property type="evidence" value="ECO:0000304"/>
    <property type="project" value="HGNC-UCL"/>
</dbReference>
<dbReference type="GO" id="GO:0007165">
    <property type="term" value="P:signal transduction"/>
    <property type="evidence" value="ECO:0000304"/>
    <property type="project" value="ProtInc"/>
</dbReference>
<dbReference type="CDD" id="cd15720">
    <property type="entry name" value="FYVE_Hrs"/>
    <property type="match status" value="1"/>
</dbReference>
<dbReference type="CDD" id="cd21387">
    <property type="entry name" value="GAT_Hrs"/>
    <property type="match status" value="1"/>
</dbReference>
<dbReference type="CDD" id="cd03569">
    <property type="entry name" value="VHS_Hrs"/>
    <property type="match status" value="1"/>
</dbReference>
<dbReference type="FunFam" id="1.20.5.1940:FF:000003">
    <property type="entry name" value="Hepatocyte growth factor-regulated tyrosine kinase substrate"/>
    <property type="match status" value="1"/>
</dbReference>
<dbReference type="FunFam" id="1.25.40.90:FF:000014">
    <property type="entry name" value="Hepatocyte growth factor-regulated tyrosine kinase substrate"/>
    <property type="match status" value="1"/>
</dbReference>
<dbReference type="FunFam" id="3.30.40.10:FF:000028">
    <property type="entry name" value="Putative hepatocyte growth factor-regulated tyrosine kinase substrate"/>
    <property type="match status" value="1"/>
</dbReference>
<dbReference type="Gene3D" id="1.20.5.1940">
    <property type="match status" value="1"/>
</dbReference>
<dbReference type="Gene3D" id="1.25.40.90">
    <property type="match status" value="1"/>
</dbReference>
<dbReference type="Gene3D" id="3.30.40.10">
    <property type="entry name" value="Zinc/RING finger domain, C3HC4 (zinc finger)"/>
    <property type="match status" value="1"/>
</dbReference>
<dbReference type="InterPro" id="IPR008942">
    <property type="entry name" value="ENTH_VHS"/>
</dbReference>
<dbReference type="InterPro" id="IPR017073">
    <property type="entry name" value="HGS/VPS27"/>
</dbReference>
<dbReference type="InterPro" id="IPR024641">
    <property type="entry name" value="HRS_helical"/>
</dbReference>
<dbReference type="InterPro" id="IPR003903">
    <property type="entry name" value="UIM_dom"/>
</dbReference>
<dbReference type="InterPro" id="IPR002014">
    <property type="entry name" value="VHS_dom"/>
</dbReference>
<dbReference type="InterPro" id="IPR000306">
    <property type="entry name" value="Znf_FYVE"/>
</dbReference>
<dbReference type="InterPro" id="IPR017455">
    <property type="entry name" value="Znf_FYVE-rel"/>
</dbReference>
<dbReference type="InterPro" id="IPR011011">
    <property type="entry name" value="Znf_FYVE_PHD"/>
</dbReference>
<dbReference type="InterPro" id="IPR013083">
    <property type="entry name" value="Znf_RING/FYVE/PHD"/>
</dbReference>
<dbReference type="PANTHER" id="PTHR46275">
    <property type="entry name" value="HEPATOCYTE GROWTH FACTOR-REGULATED TYROSINE KINASE SUBSTRATE"/>
    <property type="match status" value="1"/>
</dbReference>
<dbReference type="PANTHER" id="PTHR46275:SF1">
    <property type="entry name" value="HEPATOCYTE GROWTH FACTOR-REGULATED TYROSINE KINASE SUBSTRATE"/>
    <property type="match status" value="1"/>
</dbReference>
<dbReference type="Pfam" id="PF01363">
    <property type="entry name" value="FYVE"/>
    <property type="match status" value="1"/>
</dbReference>
<dbReference type="Pfam" id="PF12210">
    <property type="entry name" value="Hrs_helical"/>
    <property type="match status" value="1"/>
</dbReference>
<dbReference type="Pfam" id="PF00790">
    <property type="entry name" value="VHS"/>
    <property type="match status" value="1"/>
</dbReference>
<dbReference type="PIRSF" id="PIRSF036956">
    <property type="entry name" value="Hrs_Vps27"/>
    <property type="match status" value="1"/>
</dbReference>
<dbReference type="SMART" id="SM00064">
    <property type="entry name" value="FYVE"/>
    <property type="match status" value="1"/>
</dbReference>
<dbReference type="SMART" id="SM00288">
    <property type="entry name" value="VHS"/>
    <property type="match status" value="1"/>
</dbReference>
<dbReference type="SUPFAM" id="SSF48464">
    <property type="entry name" value="ENTH/VHS domain"/>
    <property type="match status" value="1"/>
</dbReference>
<dbReference type="SUPFAM" id="SSF57903">
    <property type="entry name" value="FYVE/PHD zinc finger"/>
    <property type="match status" value="1"/>
</dbReference>
<dbReference type="PROSITE" id="PS50330">
    <property type="entry name" value="UIM"/>
    <property type="match status" value="1"/>
</dbReference>
<dbReference type="PROSITE" id="PS50179">
    <property type="entry name" value="VHS"/>
    <property type="match status" value="1"/>
</dbReference>
<dbReference type="PROSITE" id="PS50178">
    <property type="entry name" value="ZF_FYVE"/>
    <property type="match status" value="1"/>
</dbReference>
<name>HGS_HUMAN</name>
<keyword id="KW-0002">3D-structure</keyword>
<keyword id="KW-0007">Acetylation</keyword>
<keyword id="KW-0025">Alternative splicing</keyword>
<keyword id="KW-0963">Cytoplasm</keyword>
<keyword id="KW-0967">Endosome</keyword>
<keyword id="KW-0472">Membrane</keyword>
<keyword id="KW-0479">Metal-binding</keyword>
<keyword id="KW-0597">Phosphoprotein</keyword>
<keyword id="KW-0653">Protein transport</keyword>
<keyword id="KW-1267">Proteomics identification</keyword>
<keyword id="KW-1185">Reference proteome</keyword>
<keyword id="KW-0813">Transport</keyword>
<keyword id="KW-0832">Ubl conjugation</keyword>
<keyword id="KW-0862">Zinc</keyword>
<keyword id="KW-0863">Zinc-finger</keyword>